<organism>
    <name type="scientific">Homo sapiens</name>
    <name type="common">Human</name>
    <dbReference type="NCBI Taxonomy" id="9606"/>
    <lineage>
        <taxon>Eukaryota</taxon>
        <taxon>Metazoa</taxon>
        <taxon>Chordata</taxon>
        <taxon>Craniata</taxon>
        <taxon>Vertebrata</taxon>
        <taxon>Euteleostomi</taxon>
        <taxon>Mammalia</taxon>
        <taxon>Eutheria</taxon>
        <taxon>Euarchontoglires</taxon>
        <taxon>Primates</taxon>
        <taxon>Haplorrhini</taxon>
        <taxon>Catarrhini</taxon>
        <taxon>Hominidae</taxon>
        <taxon>Homo</taxon>
    </lineage>
</organism>
<comment type="function">
    <text evidence="1 12 18 23 25 29 30 37 42 47 48 49 50 51">Serine-threonine kinase which is a key regulator of TNF-mediated apoptosis, necroptosis and inflammatory pathways (PubMed:17703191, PubMed:24144979, PubMed:31827280, PubMed:31827281, PubMed:32657447, PubMed:35831301). Exhibits kinase activity-dependent functions that regulate cell death and kinase-independent scaffold functions regulating inflammatory signaling and cell survival (PubMed:11101870, PubMed:19524512, PubMed:19524513, PubMed:29440439, PubMed:30988283). Has kinase-independent scaffold functions: upon binding of TNF to TNFR1, RIPK1 is recruited to the TNF-R1 signaling complex (TNF-RSC also known as complex I) where it acts as a scaffold protein promoting cell survival, in part, by activating the canonical NF-kappa-B pathway (By similarity). Kinase activity is essential to regulate necroptosis and apoptosis, two parallel forms of cell death: upon activation of its protein kinase activity, regulates assembly of two death-inducing complexes, namely complex IIa (RIPK1-FADD-CASP8), which drives apoptosis, and the complex IIb (RIPK1-RIPK3-MLKL), which drives necroptosis (By similarity). RIPK1 is required to limit CASP8-dependent TNFR1-induced apoptosis (By similarity). In normal conditions, RIPK1 acts as an inhibitor of RIPK3-dependent necroptosis, a process mediated by RIPK3 component of complex IIb, which catalyzes phosphorylation of MLKL upon induction by ZBP1 (PubMed:19524512, PubMed:19524513, PubMed:29440439, PubMed:30988283). Inhibits RIPK3-mediated necroptosis via FADD-mediated recruitment of CASP8, which cleaves RIPK1 and limits TNF-induced necroptosis (PubMed:19524512, PubMed:19524513, PubMed:29440439, PubMed:30988283). Required to inhibit apoptosis and necroptosis during embryonic development: acts by preventing the interaction of TRADD with FADD thereby limiting aberrant activation of CASP8 (By similarity). In addition to apoptosis and necroptosis, also involved in inflammatory response by promoting transcriptional production of pro-inflammatory cytokines, such as interleukin-6 (IL6) (PubMed:31827280, PubMed:31827281). Phosphorylates RIPK3: RIPK1 and RIPK3 undergo reciprocal auto- and trans-phosphorylation (PubMed:19524513). Phosphorylates DAB2IP at 'Ser-728' in a TNF-alpha-dependent manner, and thereby activates the MAP3K5-JNK apoptotic cascade (PubMed:15310755, PubMed:17389591). Required for ZBP1-induced NF-kappa-B activation in response to DNA damage (By similarity).</text>
</comment>
<comment type="catalytic activity">
    <reaction evidence="35 47 48 53">
        <text>L-seryl-[protein] + ATP = O-phospho-L-seryl-[protein] + ADP + H(+)</text>
        <dbReference type="Rhea" id="RHEA:17989"/>
        <dbReference type="Rhea" id="RHEA-COMP:9863"/>
        <dbReference type="Rhea" id="RHEA-COMP:11604"/>
        <dbReference type="ChEBI" id="CHEBI:15378"/>
        <dbReference type="ChEBI" id="CHEBI:29999"/>
        <dbReference type="ChEBI" id="CHEBI:30616"/>
        <dbReference type="ChEBI" id="CHEBI:83421"/>
        <dbReference type="ChEBI" id="CHEBI:456216"/>
        <dbReference type="EC" id="2.7.11.1"/>
    </reaction>
</comment>
<comment type="catalytic activity">
    <reaction evidence="35 47 48 53">
        <text>L-threonyl-[protein] + ATP = O-phospho-L-threonyl-[protein] + ADP + H(+)</text>
        <dbReference type="Rhea" id="RHEA:46608"/>
        <dbReference type="Rhea" id="RHEA-COMP:11060"/>
        <dbReference type="Rhea" id="RHEA-COMP:11605"/>
        <dbReference type="ChEBI" id="CHEBI:15378"/>
        <dbReference type="ChEBI" id="CHEBI:30013"/>
        <dbReference type="ChEBI" id="CHEBI:30616"/>
        <dbReference type="ChEBI" id="CHEBI:61977"/>
        <dbReference type="ChEBI" id="CHEBI:456216"/>
        <dbReference type="EC" id="2.7.11.1"/>
    </reaction>
</comment>
<comment type="activity regulation">
    <text evidence="1 35">Serine-threonine kinase activity is inhibited by linear polyubiquitination ('Met-1'-linked) by the LUBAC complex (By similarity). Inhibited by necrostatins, including necrostatin-1, necrostatin-3 and necrostatin-4 (PubMed:23473668).</text>
</comment>
<comment type="subunit">
    <text evidence="1 8 9 10 13 14 15 16 20 23 24 25 28 29 32 33 34 36 38 40 42 43 44 51 53 54 55 56">Homodimer (PubMed:29440439, PubMed:29681455). Interacts (via RIP homotypic interaction motif) with RIPK3 (via RIP homotypic interaction motif); this interaction induces RIPK1 phosphorylation and formation of a RIPK1-RIPK3 necroptosis-inducing complex (PubMed:10358032, PubMed:11734559, PubMed:19524512, PubMed:29681455, PubMed:29883609). Upon TNF-induced necrosis, the RIPK1-RIPK3 dimer further interacts with PGAM5 and MLKL; the formation of this complex leads to PGAM5 phosphorylation and increase in PGAM5 phosphatase activity (PubMed:22265414). Interacts (via the death domain) with TNFRSF6 (via the death domain) and TRADD (via the death domain) (PubMed:8612133). Is recruited by TRADD to TNFRSF1A in a TNF-dependent process (PubMed:24130170). Binds RNF216, EGFR, IKBKG, TRAF1, TRAF2 and TRAF3 (PubMed:11116146, PubMed:11854271, PubMed:8612133, PubMed:9927690). Interacts with BNLF1 (PubMed:10409763). Interacts with SQSTM1 upon TNF-alpha stimulation (PubMed:10356400). May interact with MAVS/IPS1 (PubMed:16127453). Interacts with ZFAND5 (PubMed:14754897). Interacts with RBCK1 (PubMed:17449468). Interacts with ZBP1 (By similarity). Interacts with BIRC2/c-IAP1, BIRC3/c-IAP2 and XIAP/BIRC4 (PubMed:21931591). Interacts (via kinase domain) with DAB2IP (via Ras-GAP domain); the interaction occurs in a TNF-alpha-dependent manner (PubMed:15310755, PubMed:17389591). Interacts with ARHGEF2 (PubMed:21887730). Interacts (via protein kinase domain) with RFFL; involved in RIPK1 ubiquitination (PubMed:18450452). Interacts with RNF34; involved in RIPK1 ubiquitination (Ref.35). Interacts with TICAM1 and this interaction is enhanced in the presence of WDFY1 (PubMed:25736436). Interacts with PELI1 (PubMed:29883609). Interacts (via death domain) with CRADD (via death domain); the interaction is direct (PubMed:9044836). Component of complex IIa composed of at least RIPK1, FADD and CASP8 (By similarity). Component of the AIM2 PANoptosome complex, a multiprotein complex that drives inflammatory cell death (PANoptosis) (By similarity). Interacts with MAP3K7, CFLAR, CASP8, FADD and NEMO (By similarity). Interacts with TAX1BP1; this interaction negatively regulates RIPK1 ubiquitination (PubMed:17703191). Interacts with GRB2 (PubMed:35831301). Interacts with DDX24; this interaction disrupts RLR signaling activation of IFN-dependent transcription factor IRF7 (PubMed:24204270).</text>
</comment>
<comment type="subunit">
    <text evidence="41">(Microbial infection) Interacts with mumps virus protein SH; this interaction inhibits downstream NF-kappa-B pathway activation.</text>
</comment>
<comment type="subunit">
    <text evidence="27">(Microbial infection) Interacts with Murid herpesvirus 1 protein RIR1.</text>
</comment>
<comment type="subunit">
    <text evidence="39">(Microbial infection) Interacts (via RIP homotypic interaction motif) with herpes simplex virus 1/HHV-1 protein RIR1/ICP6 (via RIP homotypic interaction motif); this interaction prevents necroptosis activation.</text>
</comment>
<comment type="subunit">
    <text evidence="39">(Microbial infection) Interacts (via RIP homotypic interaction motif) with herpes simplex virus 2/HHV-2 protein RIR1/ICP10 (via RIP homotypic interaction motif); this interaction prevents necroptosis activation.</text>
</comment>
<comment type="interaction">
    <interactant intactId="EBI-358507">
        <id>Q13546</id>
    </interactant>
    <interactant intactId="EBI-354007">
        <id>P04083</id>
        <label>ANXA1</label>
    </interactant>
    <organismsDiffer>false</organismsDiffer>
    <experiments>5</experiments>
</comment>
<comment type="interaction">
    <interactant intactId="EBI-358507">
        <id>Q13546</id>
    </interactant>
    <interactant intactId="EBI-514538">
        <id>Q13490</id>
        <label>BIRC2</label>
    </interactant>
    <organismsDiffer>false</organismsDiffer>
    <experiments>5</experiments>
</comment>
<comment type="interaction">
    <interactant intactId="EBI-358507">
        <id>Q13546</id>
    </interactant>
    <interactant intactId="EBI-517709">
        <id>Q13489</id>
        <label>BIRC3</label>
    </interactant>
    <organismsDiffer>false</organismsDiffer>
    <experiments>3</experiments>
</comment>
<comment type="interaction">
    <interactant intactId="EBI-358507">
        <id>Q13546</id>
    </interactant>
    <interactant intactId="EBI-495095">
        <id>Q92851</id>
        <label>CASP10</label>
    </interactant>
    <organismsDiffer>false</organismsDiffer>
    <experiments>2</experiments>
</comment>
<comment type="interaction">
    <interactant intactId="EBI-358507">
        <id>Q13546</id>
    </interactant>
    <interactant intactId="EBI-78060">
        <id>Q14790</id>
        <label>CASP8</label>
    </interactant>
    <organismsDiffer>false</organismsDiffer>
    <experiments>28</experiments>
</comment>
<comment type="interaction">
    <interactant intactId="EBI-358507">
        <id>Q13546</id>
    </interactant>
    <interactant intactId="EBI-723996">
        <id>Q8IVM0</id>
        <label>CCDC50</label>
    </interactant>
    <organismsDiffer>false</organismsDiffer>
    <experiments>2</experiments>
</comment>
<comment type="interaction">
    <interactant intactId="EBI-358507">
        <id>Q13546</id>
    </interactant>
    <interactant intactId="EBI-1383726">
        <id>P48729</id>
        <label>CSNK1A1</label>
    </interactant>
    <organismsDiffer>false</organismsDiffer>
    <experiments>5</experiments>
</comment>
<comment type="interaction">
    <interactant intactId="EBI-358507">
        <id>Q13546</id>
    </interactant>
    <interactant intactId="EBI-494804">
        <id>Q13158</id>
        <label>FADD</label>
    </interactant>
    <organismsDiffer>false</organismsDiffer>
    <experiments>12</experiments>
</comment>
<comment type="interaction">
    <interactant intactId="EBI-358507">
        <id>Q13546</id>
    </interactant>
    <interactant intactId="EBI-81279">
        <id>Q9Y6K9</id>
        <label>IKBKG</label>
    </interactant>
    <organismsDiffer>false</organismsDiffer>
    <experiments>8</experiments>
</comment>
<comment type="interaction">
    <interactant intactId="EBI-358507">
        <id>Q13546</id>
    </interactant>
    <interactant intactId="EBI-12401218">
        <id>Q96AB6</id>
        <label>NTAN1</label>
    </interactant>
    <organismsDiffer>false</organismsDiffer>
    <experiments>2</experiments>
</comment>
<comment type="interaction">
    <interactant intactId="EBI-358507">
        <id>Q13546</id>
    </interactant>
    <interactant intactId="EBI-751215">
        <id>Q9ULZ3</id>
        <label>PYCARD</label>
    </interactant>
    <organismsDiffer>false</organismsDiffer>
    <experiments>2</experiments>
</comment>
<comment type="interaction">
    <interactant intactId="EBI-358507">
        <id>Q13546</id>
    </interactant>
    <interactant intactId="EBI-358507">
        <id>Q13546</id>
        <label>RIPK1</label>
    </interactant>
    <organismsDiffer>false</organismsDiffer>
    <experiments>10</experiments>
</comment>
<comment type="interaction">
    <interactant intactId="EBI-358507">
        <id>Q13546</id>
    </interactant>
    <interactant intactId="EBI-298250">
        <id>Q9Y572</id>
        <label>RIPK3</label>
    </interactant>
    <organismsDiffer>false</organismsDiffer>
    <experiments>27</experiments>
</comment>
<comment type="interaction">
    <interactant intactId="EBI-358507">
        <id>Q13546</id>
    </interactant>
    <interactant intactId="EBI-299451">
        <id>P19438</id>
        <label>TNFRSF1A</label>
    </interactant>
    <organismsDiffer>false</organismsDiffer>
    <experiments>7</experiments>
</comment>
<comment type="interaction">
    <interactant intactId="EBI-358507">
        <id>Q13546</id>
    </interactant>
    <interactant intactId="EBI-359224">
        <id>Q13077</id>
        <label>TRAF1</label>
    </interactant>
    <organismsDiffer>false</organismsDiffer>
    <experiments>6</experiments>
</comment>
<comment type="interaction">
    <interactant intactId="EBI-358507">
        <id>Q13546</id>
    </interactant>
    <interactant intactId="EBI-355744">
        <id>Q12933</id>
        <label>TRAF2</label>
    </interactant>
    <organismsDiffer>false</organismsDiffer>
    <experiments>8</experiments>
</comment>
<comment type="interaction">
    <interactant intactId="EBI-358507">
        <id>Q13546</id>
    </interactant>
    <interactant intactId="EBI-357631">
        <id>Q13114</id>
        <label>TRAF3</label>
    </interactant>
    <organismsDiffer>false</organismsDiffer>
    <experiments>3</experiments>
</comment>
<comment type="interaction">
    <interactant intactId="EBI-358507">
        <id>Q13546</id>
    </interactant>
    <interactant intactId="EBI-723290">
        <id>Q13107</id>
        <label>USP4</label>
    </interactant>
    <organismsDiffer>false</organismsDiffer>
    <experiments>4</experiments>
</comment>
<comment type="interaction">
    <interactant intactId="EBI-358507">
        <id>Q13546</id>
    </interactant>
    <interactant intactId="EBI-16070376">
        <id>B7UI21</id>
        <label>nleB1</label>
    </interactant>
    <organismsDiffer>true</organismsDiffer>
    <experiments>4</experiments>
</comment>
<comment type="interaction">
    <interactant intactId="EBI-358507">
        <id>Q13546</id>
    </interactant>
    <interactant intactId="EBI-25475885">
        <id>PRO_0000449629</id>
        <label>rep</label>
        <dbReference type="UniProtKB" id="P0DTD1"/>
    </interactant>
    <organismsDiffer>true</organismsDiffer>
    <experiments>6</experiments>
</comment>
<comment type="interaction">
    <interactant intactId="EBI-358507">
        <id>Q13546</id>
    </interactant>
    <interactant intactId="EBI-11894787">
        <id>U5TQE9</id>
        <label>UL39</label>
    </interactant>
    <organismsDiffer>true</organismsDiffer>
    <experiments>3</experiments>
</comment>
<comment type="subcellular location">
    <subcellularLocation>
        <location evidence="1">Cytoplasm</location>
    </subcellularLocation>
    <subcellularLocation>
        <location evidence="2">Cell membrane</location>
    </subcellularLocation>
</comment>
<comment type="alternative products">
    <event type="alternative splicing"/>
    <isoform>
        <id>Q13546-1</id>
        <name>1</name>
        <sequence type="displayed"/>
    </isoform>
    <isoform>
        <id>Q13546-2</id>
        <name>2</name>
        <sequence type="described" ref="VSP_037690"/>
    </isoform>
</comment>
<comment type="domain">
    <text evidence="43">The RIP homotypic interaction motif (RHIM) mediates interaction with the RHIM motif of RIPK1. Both motifs form a hetero-amyloid serpentine fold, stabilized by hydrophobic packing and featuring an unusual Cys-Ser ladder of alternating Ser (from RIPK1) and Cys (from RIPK3).</text>
</comment>
<comment type="domain">
    <text evidence="8 42">The death domain mediates dimerization and activation of its kinase activity during necroptosis and apoptosis (PubMed:29440439). It engages other DD-containing proteins as well as a central (intermediate) region important for NF-kB activation and RHIM-dependent signaling (PubMed:10356400).</text>
</comment>
<comment type="PTM">
    <text evidence="50">(Microbial infection) Proteolytically cleaved by S.flexneri OspD3 within the RIP homotypic interaction motif (RHIM), leading to its degradation and inhibition of necroptosis.</text>
</comment>
<comment type="PTM">
    <text evidence="1 11 48 49">Proteolytically cleaved by CASP8 at Asp-324 (PubMed:10521396, PubMed:31827280, PubMed:31827281). Cleavage is crucial for limiting TNF-induced apoptosis, necroptosis and inflammatory response (PubMed:31827280, PubMed:31827281). Cleavage abolishes NF-kappa-B activation and enhances the interaction of TRADD with FADD (PubMed:10521396). Proteolytically cleaved by CASP6 during intrinsic apoptosis (PubMed:22858542).</text>
</comment>
<comment type="PTM">
    <text evidence="1 26 30 47 48">RIPK1 and RIPK3 undergo reciprocal auto- and trans-phosphorylation (PubMed:18408713, PubMed:19524513, PubMed:31827280). Phosphorylation of Ser-161 by RIPK3 is necessary for the formation of the necroptosis-inducing complex (PubMed:18408713). Phosphorylation at Ser-25 represses its kinase activity and consequently prevents TNF-mediated RIPK1-dependent cell death (PubMed:30988283). Phosphorylated at Ser-320 by MAP3K7 which requires prior ubiquitination with 'Lys-63'-linked chains by BIRC2/c-IAP1 and BIRC3/c-IAP2 (By similarity). This phosphorylation positively regulates RIPK1 interaction with RIPK3 to promote necroptosis but negatively regulates RIPK1 kinase activity and its interaction with FADD to mediate apoptosis (By similarity).</text>
</comment>
<comment type="PTM">
    <text evidence="37">Deubiquitinated by USP7; this modification is required for TNF-alpha-induced apoptosis.</text>
</comment>
<comment type="PTM">
    <text evidence="1 17 21 28 31 33 44 56">Ubiquitinated with 'Lys-11'-, 'Lys-48'-, 'Lys-63'- and linear-linked type ubiquitin (PubMed:15258597, PubMed:16603398, PubMed:17703191, PubMed:18450452, PubMed:21455173, PubMed:21931591, PubMed:29883609, Ref.35). Polyubiquitination with 'Lys-63'-linked chains by TRAF2 induces association with the IKK complex (PubMed:15258597). Deubiquitination of 'Lys-63'-linked chains and polyubiquitination with 'Lys-48'-linked chains by TNFAIP3 leads to RIPK1 proteasomal degradation and consequently down-regulates TNF-alpha-induced NF-kappa-B signaling (PubMed:15258597). 'Lys-48'-linked polyubiquitination by RFFL or RNF34 also promotes proteasomal degradation and negatively regulates TNF-alpha-induced NF-kappa-B signaling (PubMed:18450452, Ref.35). Linear polyubiquitinated; the head-to-tail linear polyubiquitination ('Met-1'-linked) is mediated by the LUBAC complex and decreases protein kinase activity (PubMed:21455173). Deubiquitination of linear polyubiquitin by CYLD promotes the kinase activity (By similarity). Polyubiquitinated with 'Lys-48' and 'Lys-63'-linked chains by BIRC2/c-IAP1 and BIRC3/c-IAP2, leading to activation of NF-kappa-B (PubMed:21931591). Ubiquitinated with 'Lys-63'-linked chains by PELI1 (PubMed:29883609). Ubiquitination at Lys-377 with 'Lys-63'-linked chains by BIRC2/c-IAP1 and BIRC3/c-IAP2 is essential for its phosphorylation at Ser-320 mediated by MAP3K7 (By similarity). This ubiquitination is required for NF-kB activation, suppresses RIPK1 kinase activity and plays a critical role in preventing cell death during embryonic development (By similarity).</text>
</comment>
<comment type="PTM">
    <text evidence="62">(Microbial infection) Glycosylated at Arg-603 by enteropathogenic E.coli protein NleB1: arginine GlcNAcylation prevents homotypic/heterotypic death domain interactions.</text>
</comment>
<comment type="disease" evidence="45">
    <disease id="DI-05328">
        <name>Immunodeficiency 57 with autoinflammation</name>
        <acronym>IMD57</acronym>
        <description>An autosomal recessive primary immunodeficiency characterized by lymphopenia and recurrent viral, bacterial, and fungal infections. Patients exhibit early-onset inflammatory bowel disease involving the upper and lower gastrointestinal tract, and develop progressive polyarthritis.</description>
        <dbReference type="MIM" id="618108"/>
    </disease>
    <text evidence="45">The disease is caused by variants affecting the gene represented in this entry. RIPK1-deficient immune cells from IMD57 patients have impaired proinflammatory signaling leading to dysregulated cytokine secretion and are prone to necroptosis.</text>
</comment>
<comment type="disease" evidence="48 49">
    <disease id="DI-05817">
        <name>Autoinflammation with episodic fever and lymphadenopathy</name>
        <acronym>AIEFL</acronym>
        <description>An autosomal dominant immunologic disorder characterized by early onset of recurrent episodes of unexplained fever, lymphadenopathy, hepatosplenomegaly, and increased levels of inflammatory cytokines and chemokines in patient serum.</description>
        <dbReference type="MIM" id="618852"/>
    </disease>
    <text>The disease is caused by variants affecting the gene represented in this entry.</text>
</comment>
<comment type="similarity">
    <text evidence="61">Belongs to the protein kinase superfamily. TKL Ser/Thr protein kinase family.</text>
</comment>
<comment type="sequence caution" evidence="61">
    <conflict type="erroneous initiation">
        <sequence resource="EMBL-CDS" id="BAG65471"/>
    </conflict>
    <text>Truncated N-terminus.</text>
</comment>
<keyword id="KW-0002">3D-structure</keyword>
<keyword id="KW-0025">Alternative splicing</keyword>
<keyword id="KW-0053">Apoptosis</keyword>
<keyword id="KW-0067">ATP-binding</keyword>
<keyword id="KW-1003">Cell membrane</keyword>
<keyword id="KW-0963">Cytoplasm</keyword>
<keyword id="KW-0225">Disease variant</keyword>
<keyword id="KW-0325">Glycoprotein</keyword>
<keyword id="KW-0945">Host-virus interaction</keyword>
<keyword id="KW-0395">Inflammatory response</keyword>
<keyword id="KW-1017">Isopeptide bond</keyword>
<keyword id="KW-0418">Kinase</keyword>
<keyword id="KW-0472">Membrane</keyword>
<keyword id="KW-1210">Necrosis</keyword>
<keyword id="KW-0547">Nucleotide-binding</keyword>
<keyword id="KW-0597">Phosphoprotein</keyword>
<keyword id="KW-1267">Proteomics identification</keyword>
<keyword id="KW-1185">Reference proteome</keyword>
<keyword id="KW-0723">Serine/threonine-protein kinase</keyword>
<keyword id="KW-0808">Transferase</keyword>
<keyword id="KW-0832">Ubl conjugation</keyword>
<name>RIPK1_HUMAN</name>
<proteinExistence type="evidence at protein level"/>
<accession>Q13546</accession>
<accession>A0AV89</accession>
<accession>B2RAG1</accession>
<accession>B4E3F9</accession>
<accession>Q13180</accession>
<accession>Q59H33</accession>
<dbReference type="EC" id="2.7.11.1" evidence="35 47 48 53"/>
<dbReference type="EMBL" id="U50062">
    <property type="protein sequence ID" value="AAC32232.1"/>
    <property type="molecule type" value="mRNA"/>
</dbReference>
<dbReference type="EMBL" id="AK314176">
    <property type="protein sequence ID" value="BAG36858.1"/>
    <property type="molecule type" value="mRNA"/>
</dbReference>
<dbReference type="EMBL" id="AK304701">
    <property type="protein sequence ID" value="BAG65471.1"/>
    <property type="status" value="ALT_INIT"/>
    <property type="molecule type" value="mRNA"/>
</dbReference>
<dbReference type="EMBL" id="AY682848">
    <property type="protein sequence ID" value="AAT74626.1"/>
    <property type="molecule type" value="Genomic_DNA"/>
</dbReference>
<dbReference type="EMBL" id="AL031963">
    <property type="status" value="NOT_ANNOTATED_CDS"/>
    <property type="molecule type" value="Genomic_DNA"/>
</dbReference>
<dbReference type="EMBL" id="BC126254">
    <property type="protein sequence ID" value="AAI26255.1"/>
    <property type="molecule type" value="mRNA"/>
</dbReference>
<dbReference type="EMBL" id="BC126256">
    <property type="protein sequence ID" value="AAI26257.1"/>
    <property type="molecule type" value="mRNA"/>
</dbReference>
<dbReference type="EMBL" id="AB208926">
    <property type="protein sequence ID" value="BAD92163.1"/>
    <property type="molecule type" value="mRNA"/>
</dbReference>
<dbReference type="EMBL" id="U25994">
    <property type="protein sequence ID" value="AAC50137.1"/>
    <property type="molecule type" value="mRNA"/>
</dbReference>
<dbReference type="CCDS" id="CCDS4482.1">
    <molecule id="Q13546-1"/>
</dbReference>
<dbReference type="CCDS" id="CCDS93851.1">
    <molecule id="Q13546-2"/>
</dbReference>
<dbReference type="PIR" id="T09479">
    <property type="entry name" value="T09479"/>
</dbReference>
<dbReference type="RefSeq" id="NP_001341859.1">
    <molecule id="Q13546-1"/>
    <property type="nucleotide sequence ID" value="NM_001354930.2"/>
</dbReference>
<dbReference type="RefSeq" id="NP_001341860.1">
    <molecule id="Q13546-2"/>
    <property type="nucleotide sequence ID" value="NM_001354931.2"/>
</dbReference>
<dbReference type="RefSeq" id="NP_003795.2">
    <molecule id="Q13546-1"/>
    <property type="nucleotide sequence ID" value="NM_003804.6"/>
</dbReference>
<dbReference type="RefSeq" id="XP_005249514.2">
    <property type="nucleotide sequence ID" value="XM_005249457.3"/>
</dbReference>
<dbReference type="RefSeq" id="XP_047275403.1">
    <molecule id="Q13546-1"/>
    <property type="nucleotide sequence ID" value="XM_047419447.1"/>
</dbReference>
<dbReference type="RefSeq" id="XP_047275404.1">
    <molecule id="Q13546-1"/>
    <property type="nucleotide sequence ID" value="XM_047419448.1"/>
</dbReference>
<dbReference type="RefSeq" id="XP_054212622.1">
    <molecule id="Q13546-1"/>
    <property type="nucleotide sequence ID" value="XM_054356647.1"/>
</dbReference>
<dbReference type="PDB" id="4ITH">
    <property type="method" value="X-ray"/>
    <property type="resolution" value="2.25 A"/>
    <property type="chains" value="A/B=1-294"/>
</dbReference>
<dbReference type="PDB" id="4ITI">
    <property type="method" value="X-ray"/>
    <property type="resolution" value="2.86 A"/>
    <property type="chains" value="A/B=1-294"/>
</dbReference>
<dbReference type="PDB" id="4ITJ">
    <property type="method" value="X-ray"/>
    <property type="resolution" value="1.80 A"/>
    <property type="chains" value="A/B=1-294"/>
</dbReference>
<dbReference type="PDB" id="4NEU">
    <property type="method" value="X-ray"/>
    <property type="resolution" value="2.57 A"/>
    <property type="chains" value="A/B=1-324"/>
</dbReference>
<dbReference type="PDB" id="5HX6">
    <property type="method" value="X-ray"/>
    <property type="resolution" value="2.23 A"/>
    <property type="chains" value="A/B=1-294"/>
</dbReference>
<dbReference type="PDB" id="5TX5">
    <property type="method" value="X-ray"/>
    <property type="resolution" value="2.56 A"/>
    <property type="chains" value="A/B=1-294"/>
</dbReference>
<dbReference type="PDB" id="5V7Z">
    <property type="method" value="NMR"/>
    <property type="chains" value="B/D/F/H=532-549"/>
</dbReference>
<dbReference type="PDB" id="6AC5">
    <property type="method" value="X-ray"/>
    <property type="resolution" value="1.45 A"/>
    <property type="chains" value="A=561-671"/>
</dbReference>
<dbReference type="PDB" id="6C3E">
    <property type="method" value="X-ray"/>
    <property type="resolution" value="2.60 A"/>
    <property type="chains" value="A/B=2-294"/>
</dbReference>
<dbReference type="PDB" id="6C4D">
    <property type="method" value="X-ray"/>
    <property type="resolution" value="2.52 A"/>
    <property type="chains" value="A/B/C/D=2-294"/>
</dbReference>
<dbReference type="PDB" id="6HHO">
    <property type="method" value="X-ray"/>
    <property type="resolution" value="3.49 A"/>
    <property type="chains" value="A/B=1-294"/>
</dbReference>
<dbReference type="PDB" id="6NW2">
    <property type="method" value="X-ray"/>
    <property type="resolution" value="2.00 A"/>
    <property type="chains" value="A/B=1-294"/>
</dbReference>
<dbReference type="PDB" id="6NYH">
    <property type="method" value="X-ray"/>
    <property type="resolution" value="2.10 A"/>
    <property type="chains" value="A/B=1-294"/>
</dbReference>
<dbReference type="PDB" id="6OCQ">
    <property type="method" value="X-ray"/>
    <property type="resolution" value="2.79 A"/>
    <property type="chains" value="A/B=1-294"/>
</dbReference>
<dbReference type="PDB" id="6R5F">
    <property type="method" value="X-ray"/>
    <property type="resolution" value="3.25 A"/>
    <property type="chains" value="A/B/C/D=1-294"/>
</dbReference>
<dbReference type="PDB" id="6RLN">
    <property type="method" value="X-ray"/>
    <property type="resolution" value="2.87 A"/>
    <property type="chains" value="A/B=1-294"/>
</dbReference>
<dbReference type="PDB" id="7CJB">
    <property type="method" value="X-ray"/>
    <property type="resolution" value="2.80 A"/>
    <property type="chains" value="D/H/L/P=189-203"/>
</dbReference>
<dbReference type="PDB" id="7FCZ">
    <property type="method" value="X-ray"/>
    <property type="resolution" value="2.21 A"/>
    <property type="chains" value="A/B=1-294"/>
</dbReference>
<dbReference type="PDB" id="7FD0">
    <property type="method" value="X-ray"/>
    <property type="resolution" value="2.00 A"/>
    <property type="chains" value="A/B=1-294"/>
</dbReference>
<dbReference type="PDB" id="7XMK">
    <property type="method" value="X-ray"/>
    <property type="resolution" value="2.38 A"/>
    <property type="chains" value="A/B=1-294"/>
</dbReference>
<dbReference type="PDB" id="7YDX">
    <property type="method" value="X-ray"/>
    <property type="resolution" value="2.64 A"/>
    <property type="chains" value="A/B=1-294"/>
</dbReference>
<dbReference type="PDB" id="8I2N">
    <property type="method" value="X-ray"/>
    <property type="resolution" value="2.29 A"/>
    <property type="chains" value="A/B=1-294"/>
</dbReference>
<dbReference type="PDBsum" id="4ITH"/>
<dbReference type="PDBsum" id="4ITI"/>
<dbReference type="PDBsum" id="4ITJ"/>
<dbReference type="PDBsum" id="4NEU"/>
<dbReference type="PDBsum" id="5HX6"/>
<dbReference type="PDBsum" id="5TX5"/>
<dbReference type="PDBsum" id="5V7Z"/>
<dbReference type="PDBsum" id="6AC5"/>
<dbReference type="PDBsum" id="6C3E"/>
<dbReference type="PDBsum" id="6C4D"/>
<dbReference type="PDBsum" id="6HHO"/>
<dbReference type="PDBsum" id="6NW2"/>
<dbReference type="PDBsum" id="6NYH"/>
<dbReference type="PDBsum" id="6OCQ"/>
<dbReference type="PDBsum" id="6R5F"/>
<dbReference type="PDBsum" id="6RLN"/>
<dbReference type="PDBsum" id="7CJB"/>
<dbReference type="PDBsum" id="7FCZ"/>
<dbReference type="PDBsum" id="7FD0"/>
<dbReference type="PDBsum" id="7XMK"/>
<dbReference type="PDBsum" id="7YDX"/>
<dbReference type="PDBsum" id="8I2N"/>
<dbReference type="BMRB" id="Q13546"/>
<dbReference type="SMR" id="Q13546"/>
<dbReference type="BioGRID" id="114274">
    <property type="interactions" value="205"/>
</dbReference>
<dbReference type="ComplexPortal" id="CPX-1907">
    <property type="entry name" value="Ripoptosome"/>
</dbReference>
<dbReference type="ComplexPortal" id="CPX-25723">
    <property type="entry name" value="sTNF-TNR1A receptor-ligand core complex, BIRC3 variant"/>
</dbReference>
<dbReference type="ComplexPortal" id="CPX-25726">
    <property type="entry name" value="mTNF-TNR1A receptor-ligand core complex, BIRC3 variant"/>
</dbReference>
<dbReference type="ComplexPortal" id="CPX-8828">
    <property type="entry name" value="sTNF-TNR1A receptor-ligand core complex, BIRC2 variant"/>
</dbReference>
<dbReference type="ComplexPortal" id="CPX-8932">
    <property type="entry name" value="mTNF-TNR1A receptor-ligand core complex, BIRC2 variant"/>
</dbReference>
<dbReference type="CORUM" id="Q13546"/>
<dbReference type="DIP" id="DIP-433N"/>
<dbReference type="FunCoup" id="Q13546">
    <property type="interactions" value="1287"/>
</dbReference>
<dbReference type="IntAct" id="Q13546">
    <property type="interactions" value="121"/>
</dbReference>
<dbReference type="MINT" id="Q13546"/>
<dbReference type="STRING" id="9606.ENSP00000259808"/>
<dbReference type="BindingDB" id="Q13546"/>
<dbReference type="ChEMBL" id="CHEMBL5464"/>
<dbReference type="DrugBank" id="DB12010">
    <property type="generic name" value="Fostamatinib"/>
</dbReference>
<dbReference type="DrugBank" id="DB16875">
    <property type="generic name" value="GSK-2982772"/>
</dbReference>
<dbReference type="DrugBank" id="DB16492">
    <property type="generic name" value="SAR443122"/>
</dbReference>
<dbReference type="DrugCentral" id="Q13546"/>
<dbReference type="GuidetoPHARMACOLOGY" id="2189"/>
<dbReference type="GlyCosmos" id="Q13546">
    <property type="glycosylation" value="3 sites, 1 glycan"/>
</dbReference>
<dbReference type="GlyGen" id="Q13546">
    <property type="glycosylation" value="3 sites, 1 O-linked glycan (3 sites)"/>
</dbReference>
<dbReference type="iPTMnet" id="Q13546"/>
<dbReference type="MetOSite" id="Q13546"/>
<dbReference type="PhosphoSitePlus" id="Q13546"/>
<dbReference type="BioMuta" id="RIPK1"/>
<dbReference type="DMDM" id="60393639"/>
<dbReference type="CPTAC" id="CPTAC-1053"/>
<dbReference type="CPTAC" id="CPTAC-900"/>
<dbReference type="CPTAC" id="CPTAC-901"/>
<dbReference type="CPTAC" id="CPTAC-902"/>
<dbReference type="jPOST" id="Q13546"/>
<dbReference type="MassIVE" id="Q13546"/>
<dbReference type="PaxDb" id="9606-ENSP00000259808"/>
<dbReference type="PeptideAtlas" id="Q13546"/>
<dbReference type="ProteomicsDB" id="59527">
    <molecule id="Q13546-1"/>
</dbReference>
<dbReference type="ProteomicsDB" id="59528">
    <molecule id="Q13546-2"/>
</dbReference>
<dbReference type="Pumba" id="Q13546"/>
<dbReference type="Antibodypedia" id="4145">
    <property type="antibodies" value="666 antibodies from 44 providers"/>
</dbReference>
<dbReference type="DNASU" id="8737"/>
<dbReference type="Ensembl" id="ENST00000259808.9">
    <molecule id="Q13546-1"/>
    <property type="protein sequence ID" value="ENSP00000259808.3"/>
    <property type="gene ID" value="ENSG00000137275.16"/>
</dbReference>
<dbReference type="Ensembl" id="ENST00000380409.3">
    <molecule id="Q13546-2"/>
    <property type="protein sequence ID" value="ENSP00000369773.3"/>
    <property type="gene ID" value="ENSG00000137275.16"/>
</dbReference>
<dbReference type="GeneID" id="8737"/>
<dbReference type="KEGG" id="hsa:8737"/>
<dbReference type="MANE-Select" id="ENST00000259808.9">
    <property type="protein sequence ID" value="ENSP00000259808.3"/>
    <property type="RefSeq nucleotide sequence ID" value="NM_001354930.2"/>
    <property type="RefSeq protein sequence ID" value="NP_001341859.1"/>
</dbReference>
<dbReference type="UCSC" id="uc003mux.4">
    <molecule id="Q13546-1"/>
    <property type="organism name" value="human"/>
</dbReference>
<dbReference type="AGR" id="HGNC:10019"/>
<dbReference type="CTD" id="8737"/>
<dbReference type="DisGeNET" id="8737"/>
<dbReference type="GeneCards" id="RIPK1"/>
<dbReference type="HGNC" id="HGNC:10019">
    <property type="gene designation" value="RIPK1"/>
</dbReference>
<dbReference type="HPA" id="ENSG00000137275">
    <property type="expression patterns" value="Low tissue specificity"/>
</dbReference>
<dbReference type="MalaCards" id="RIPK1"/>
<dbReference type="MIM" id="603453">
    <property type="type" value="gene"/>
</dbReference>
<dbReference type="MIM" id="618108">
    <property type="type" value="phenotype"/>
</dbReference>
<dbReference type="MIM" id="618852">
    <property type="type" value="phenotype"/>
</dbReference>
<dbReference type="neXtProt" id="NX_Q13546"/>
<dbReference type="OpenTargets" id="ENSG00000137275"/>
<dbReference type="Orphanet" id="529977">
    <property type="disease" value="Immune dysregulation-inflammatory bowel disease-arthritis-recurrent infections-lymphopenia syndrome"/>
</dbReference>
<dbReference type="PharmGKB" id="PA34394"/>
<dbReference type="VEuPathDB" id="HostDB:ENSG00000137275"/>
<dbReference type="eggNOG" id="KOG0192">
    <property type="taxonomic scope" value="Eukaryota"/>
</dbReference>
<dbReference type="GeneTree" id="ENSGT00940000159347"/>
<dbReference type="HOGENOM" id="CLU_017229_0_0_1"/>
<dbReference type="InParanoid" id="Q13546"/>
<dbReference type="OrthoDB" id="535509at2759"/>
<dbReference type="PAN-GO" id="Q13546">
    <property type="GO annotations" value="1 GO annotation based on evolutionary models"/>
</dbReference>
<dbReference type="PhylomeDB" id="Q13546"/>
<dbReference type="TreeFam" id="TF106506"/>
<dbReference type="BRENDA" id="2.7.10.2">
    <property type="organism ID" value="2681"/>
</dbReference>
<dbReference type="PathwayCommons" id="Q13546"/>
<dbReference type="Reactome" id="R-HSA-140534">
    <property type="pathway name" value="Caspase activation via Death Receptors in the presence of ligand"/>
</dbReference>
<dbReference type="Reactome" id="R-HSA-168927">
    <property type="pathway name" value="TICAM1, RIP1-mediated IKK complex recruitment"/>
</dbReference>
<dbReference type="Reactome" id="R-HSA-1810476">
    <property type="pathway name" value="RIP-mediated NFkB activation via ZBP1"/>
</dbReference>
<dbReference type="Reactome" id="R-HSA-2562578">
    <property type="pathway name" value="TRIF-mediated programmed cell death"/>
</dbReference>
<dbReference type="Reactome" id="R-HSA-3295583">
    <property type="pathway name" value="TRP channels"/>
</dbReference>
<dbReference type="Reactome" id="R-HSA-3371378">
    <property type="pathway name" value="Regulation by c-FLIP"/>
</dbReference>
<dbReference type="Reactome" id="R-HSA-5213460">
    <property type="pathway name" value="RIPK1-mediated regulated necrosis"/>
</dbReference>
<dbReference type="Reactome" id="R-HSA-5218900">
    <property type="pathway name" value="CASP8 activity is inhibited"/>
</dbReference>
<dbReference type="Reactome" id="R-HSA-5357786">
    <property type="pathway name" value="TNFR1-induced proapoptotic signaling"/>
</dbReference>
<dbReference type="Reactome" id="R-HSA-5357905">
    <property type="pathway name" value="Regulation of TNFR1 signaling"/>
</dbReference>
<dbReference type="Reactome" id="R-HSA-5357956">
    <property type="pathway name" value="TNFR1-induced NF-kappa-B signaling pathway"/>
</dbReference>
<dbReference type="Reactome" id="R-HSA-5675482">
    <property type="pathway name" value="Regulation of necroptotic cell death"/>
</dbReference>
<dbReference type="Reactome" id="R-HSA-5689880">
    <property type="pathway name" value="Ub-specific processing proteases"/>
</dbReference>
<dbReference type="Reactome" id="R-HSA-5689896">
    <property type="pathway name" value="Ovarian tumor domain proteases"/>
</dbReference>
<dbReference type="Reactome" id="R-HSA-69416">
    <property type="pathway name" value="Dimerization of procaspase-8"/>
</dbReference>
<dbReference type="Reactome" id="R-HSA-75893">
    <property type="pathway name" value="TNF signaling"/>
</dbReference>
<dbReference type="Reactome" id="R-HSA-9013957">
    <property type="pathway name" value="TLR3-mediated TICAM1-dependent programmed cell death"/>
</dbReference>
<dbReference type="Reactome" id="R-HSA-933543">
    <property type="pathway name" value="NF-kB activation through FADD/RIP-1 pathway mediated by caspase-8 and -10"/>
</dbReference>
<dbReference type="Reactome" id="R-HSA-937041">
    <property type="pathway name" value="IKK complex recruitment mediated by RIP1"/>
</dbReference>
<dbReference type="Reactome" id="R-HSA-9679191">
    <property type="pathway name" value="Potential therapeutics for SARS"/>
</dbReference>
<dbReference type="Reactome" id="R-HSA-9686347">
    <property type="pathway name" value="Microbial modulation of RIPK1-mediated regulated necrosis"/>
</dbReference>
<dbReference type="Reactome" id="R-HSA-9692913">
    <property type="pathway name" value="SARS-CoV-1-mediated effects on programmed cell death"/>
</dbReference>
<dbReference type="Reactome" id="R-HSA-9693928">
    <property type="pathway name" value="Defective RIPK1-mediated regulated necrosis"/>
</dbReference>
<dbReference type="SignaLink" id="Q13546"/>
<dbReference type="SIGNOR" id="Q13546"/>
<dbReference type="BioGRID-ORCS" id="8737">
    <property type="hits" value="38 hits in 1199 CRISPR screens"/>
</dbReference>
<dbReference type="ChiTaRS" id="RIPK1">
    <property type="organism name" value="human"/>
</dbReference>
<dbReference type="EvolutionaryTrace" id="Q13546"/>
<dbReference type="GeneWiki" id="RIPK1"/>
<dbReference type="GenomeRNAi" id="8737"/>
<dbReference type="Pharos" id="Q13546">
    <property type="development level" value="Tchem"/>
</dbReference>
<dbReference type="PRO" id="PR:Q13546"/>
<dbReference type="Proteomes" id="UP000005640">
    <property type="component" value="Chromosome 6"/>
</dbReference>
<dbReference type="RNAct" id="Q13546">
    <property type="molecule type" value="protein"/>
</dbReference>
<dbReference type="Bgee" id="ENSG00000137275">
    <property type="expression patterns" value="Expressed in granulocyte and 154 other cell types or tissues"/>
</dbReference>
<dbReference type="ExpressionAtlas" id="Q13546">
    <property type="expression patterns" value="baseline and differential"/>
</dbReference>
<dbReference type="GO" id="GO:0005737">
    <property type="term" value="C:cytoplasm"/>
    <property type="evidence" value="ECO:0000318"/>
    <property type="project" value="GO_Central"/>
</dbReference>
<dbReference type="GO" id="GO:0005829">
    <property type="term" value="C:cytosol"/>
    <property type="evidence" value="ECO:0000304"/>
    <property type="project" value="Reactome"/>
</dbReference>
<dbReference type="GO" id="GO:0031264">
    <property type="term" value="C:death-inducing signaling complex"/>
    <property type="evidence" value="ECO:0000314"/>
    <property type="project" value="BHF-UCL"/>
</dbReference>
<dbReference type="GO" id="GO:0010008">
    <property type="term" value="C:endosome membrane"/>
    <property type="evidence" value="ECO:0000304"/>
    <property type="project" value="Reactome"/>
</dbReference>
<dbReference type="GO" id="GO:0005739">
    <property type="term" value="C:mitochondrion"/>
    <property type="evidence" value="ECO:0000314"/>
    <property type="project" value="BHF-UCL"/>
</dbReference>
<dbReference type="GO" id="GO:0005886">
    <property type="term" value="C:plasma membrane"/>
    <property type="evidence" value="ECO:0000304"/>
    <property type="project" value="Reactome"/>
</dbReference>
<dbReference type="GO" id="GO:0032991">
    <property type="term" value="C:protein-containing complex"/>
    <property type="evidence" value="ECO:0000314"/>
    <property type="project" value="UniProtKB"/>
</dbReference>
<dbReference type="GO" id="GO:0043235">
    <property type="term" value="C:receptor complex"/>
    <property type="evidence" value="ECO:0000314"/>
    <property type="project" value="BHF-UCL"/>
</dbReference>
<dbReference type="GO" id="GO:0097342">
    <property type="term" value="C:ripoptosome"/>
    <property type="evidence" value="ECO:0000314"/>
    <property type="project" value="UniProtKB"/>
</dbReference>
<dbReference type="GO" id="GO:0005524">
    <property type="term" value="F:ATP binding"/>
    <property type="evidence" value="ECO:0007669"/>
    <property type="project" value="UniProtKB-KW"/>
</dbReference>
<dbReference type="GO" id="GO:0070513">
    <property type="term" value="F:death domain binding"/>
    <property type="evidence" value="ECO:0000353"/>
    <property type="project" value="BHF-UCL"/>
</dbReference>
<dbReference type="GO" id="GO:0005123">
    <property type="term" value="F:death receptor binding"/>
    <property type="evidence" value="ECO:0000353"/>
    <property type="project" value="BHF-UCL"/>
</dbReference>
<dbReference type="GO" id="GO:0042802">
    <property type="term" value="F:identical protein binding"/>
    <property type="evidence" value="ECO:0000353"/>
    <property type="project" value="IntAct"/>
</dbReference>
<dbReference type="GO" id="GO:0004706">
    <property type="term" value="F:JUN kinase kinase kinase activity"/>
    <property type="evidence" value="ECO:0000318"/>
    <property type="project" value="GO_Central"/>
</dbReference>
<dbReference type="GO" id="GO:0042803">
    <property type="term" value="F:protein homodimerization activity"/>
    <property type="evidence" value="ECO:0000314"/>
    <property type="project" value="UniProtKB"/>
</dbReference>
<dbReference type="GO" id="GO:0004672">
    <property type="term" value="F:protein kinase activity"/>
    <property type="evidence" value="ECO:0000314"/>
    <property type="project" value="UniProtKB"/>
</dbReference>
<dbReference type="GO" id="GO:0106310">
    <property type="term" value="F:protein serine kinase activity"/>
    <property type="evidence" value="ECO:0007669"/>
    <property type="project" value="RHEA"/>
</dbReference>
<dbReference type="GO" id="GO:0004674">
    <property type="term" value="F:protein serine/threonine kinase activity"/>
    <property type="evidence" value="ECO:0000314"/>
    <property type="project" value="UniProtKB"/>
</dbReference>
<dbReference type="GO" id="GO:0044877">
    <property type="term" value="F:protein-containing complex binding"/>
    <property type="evidence" value="ECO:0000314"/>
    <property type="project" value="UniProtKB"/>
</dbReference>
<dbReference type="GO" id="GO:0035591">
    <property type="term" value="F:signaling adaptor activity"/>
    <property type="evidence" value="ECO:0007669"/>
    <property type="project" value="Ensembl"/>
</dbReference>
<dbReference type="GO" id="GO:0031625">
    <property type="term" value="F:ubiquitin protein ligase binding"/>
    <property type="evidence" value="ECO:0000353"/>
    <property type="project" value="UniProtKB"/>
</dbReference>
<dbReference type="GO" id="GO:1990000">
    <property type="term" value="P:amyloid fibril formation"/>
    <property type="evidence" value="ECO:0000315"/>
    <property type="project" value="UniProtKB"/>
</dbReference>
<dbReference type="GO" id="GO:0006915">
    <property type="term" value="P:apoptotic process"/>
    <property type="evidence" value="ECO:0000315"/>
    <property type="project" value="UniProtKB"/>
</dbReference>
<dbReference type="GO" id="GO:0007249">
    <property type="term" value="P:canonical NF-kappaB signal transduction"/>
    <property type="evidence" value="ECO:0000315"/>
    <property type="project" value="BHF-UCL"/>
</dbReference>
<dbReference type="GO" id="GO:0071363">
    <property type="term" value="P:cellular response to growth factor stimulus"/>
    <property type="evidence" value="ECO:0007669"/>
    <property type="project" value="Ensembl"/>
</dbReference>
<dbReference type="GO" id="GO:0070301">
    <property type="term" value="P:cellular response to hydrogen peroxide"/>
    <property type="evidence" value="ECO:0000250"/>
    <property type="project" value="ARUK-UCL"/>
</dbReference>
<dbReference type="GO" id="GO:0071356">
    <property type="term" value="P:cellular response to tumor necrosis factor"/>
    <property type="evidence" value="ECO:0000314"/>
    <property type="project" value="UniProtKB"/>
</dbReference>
<dbReference type="GO" id="GO:0097191">
    <property type="term" value="P:extrinsic apoptotic signaling pathway"/>
    <property type="evidence" value="ECO:0000314"/>
    <property type="project" value="BHF-UCL"/>
</dbReference>
<dbReference type="GO" id="GO:0006954">
    <property type="term" value="P:inflammatory response"/>
    <property type="evidence" value="ECO:0007669"/>
    <property type="project" value="UniProtKB-KW"/>
</dbReference>
<dbReference type="GO" id="GO:0035556">
    <property type="term" value="P:intracellular signal transduction"/>
    <property type="evidence" value="ECO:0000314"/>
    <property type="project" value="ARUK-UCL"/>
</dbReference>
<dbReference type="GO" id="GO:0070266">
    <property type="term" value="P:necroptotic process"/>
    <property type="evidence" value="ECO:0000315"/>
    <property type="project" value="UniProtKB"/>
</dbReference>
<dbReference type="GO" id="GO:0097527">
    <property type="term" value="P:necroptotic signaling pathway"/>
    <property type="evidence" value="ECO:0000315"/>
    <property type="project" value="UniProtKB"/>
</dbReference>
<dbReference type="GO" id="GO:0043066">
    <property type="term" value="P:negative regulation of apoptotic process"/>
    <property type="evidence" value="ECO:0000250"/>
    <property type="project" value="UniProtKB"/>
</dbReference>
<dbReference type="GO" id="GO:0043124">
    <property type="term" value="P:negative regulation of canonical NF-kappaB signal transduction"/>
    <property type="evidence" value="ECO:0000315"/>
    <property type="project" value="UniProtKB"/>
</dbReference>
<dbReference type="GO" id="GO:2001237">
    <property type="term" value="P:negative regulation of extrinsic apoptotic signaling pathway"/>
    <property type="evidence" value="ECO:0000315"/>
    <property type="project" value="UniProtKB"/>
</dbReference>
<dbReference type="GO" id="GO:2001240">
    <property type="term" value="P:negative regulation of extrinsic apoptotic signaling pathway in absence of ligand"/>
    <property type="evidence" value="ECO:0007669"/>
    <property type="project" value="Ensembl"/>
</dbReference>
<dbReference type="GO" id="GO:0060546">
    <property type="term" value="P:negative regulation of necroptotic process"/>
    <property type="evidence" value="ECO:0000250"/>
    <property type="project" value="UniProtKB"/>
</dbReference>
<dbReference type="GO" id="GO:0036289">
    <property type="term" value="P:peptidyl-serine autophosphorylation"/>
    <property type="evidence" value="ECO:0000314"/>
    <property type="project" value="UniProtKB"/>
</dbReference>
<dbReference type="GO" id="GO:0043065">
    <property type="term" value="P:positive regulation of apoptotic process"/>
    <property type="evidence" value="ECO:0000314"/>
    <property type="project" value="UniProtKB"/>
</dbReference>
<dbReference type="GO" id="GO:0043123">
    <property type="term" value="P:positive regulation of canonical NF-kappaB signal transduction"/>
    <property type="evidence" value="ECO:0000314"/>
    <property type="project" value="UniProtKB"/>
</dbReference>
<dbReference type="GO" id="GO:1900119">
    <property type="term" value="P:positive regulation of execution phase of apoptosis"/>
    <property type="evidence" value="ECO:0007669"/>
    <property type="project" value="Ensembl"/>
</dbReference>
<dbReference type="GO" id="GO:2001238">
    <property type="term" value="P:positive regulation of extrinsic apoptotic signaling pathway"/>
    <property type="evidence" value="ECO:0000315"/>
    <property type="project" value="UniProtKB"/>
</dbReference>
<dbReference type="GO" id="GO:0010628">
    <property type="term" value="P:positive regulation of gene expression"/>
    <property type="evidence" value="ECO:0000314"/>
    <property type="project" value="ARUK-UCL"/>
</dbReference>
<dbReference type="GO" id="GO:0050729">
    <property type="term" value="P:positive regulation of inflammatory response"/>
    <property type="evidence" value="ECO:0000315"/>
    <property type="project" value="UniProtKB"/>
</dbReference>
<dbReference type="GO" id="GO:0070105">
    <property type="term" value="P:positive regulation of interleukin-6-mediated signaling pathway"/>
    <property type="evidence" value="ECO:0000315"/>
    <property type="project" value="UniProtKB"/>
</dbReference>
<dbReference type="GO" id="GO:0032757">
    <property type="term" value="P:positive regulation of interleukin-8 production"/>
    <property type="evidence" value="ECO:0000314"/>
    <property type="project" value="BHF-UCL"/>
</dbReference>
<dbReference type="GO" id="GO:0046330">
    <property type="term" value="P:positive regulation of JNK cascade"/>
    <property type="evidence" value="ECO:0000314"/>
    <property type="project" value="UniProtKB"/>
</dbReference>
<dbReference type="GO" id="GO:0045651">
    <property type="term" value="P:positive regulation of macrophage differentiation"/>
    <property type="evidence" value="ECO:0000315"/>
    <property type="project" value="UniProtKB"/>
</dbReference>
<dbReference type="GO" id="GO:1903800">
    <property type="term" value="P:positive regulation of miRNA processing"/>
    <property type="evidence" value="ECO:0000314"/>
    <property type="project" value="ARUK-UCL"/>
</dbReference>
<dbReference type="GO" id="GO:0060545">
    <property type="term" value="P:positive regulation of necroptotic process"/>
    <property type="evidence" value="ECO:0000315"/>
    <property type="project" value="UniProtKB"/>
</dbReference>
<dbReference type="GO" id="GO:0043525">
    <property type="term" value="P:positive regulation of neuron apoptotic process"/>
    <property type="evidence" value="ECO:0007669"/>
    <property type="project" value="Ensembl"/>
</dbReference>
<dbReference type="GO" id="GO:0051092">
    <property type="term" value="P:positive regulation of NF-kappaB transcription factor activity"/>
    <property type="evidence" value="ECO:0000315"/>
    <property type="project" value="UniProtKB"/>
</dbReference>
<dbReference type="GO" id="GO:1901224">
    <property type="term" value="P:positive regulation of non-canonical NF-kappaB signal transduction"/>
    <property type="evidence" value="ECO:0007669"/>
    <property type="project" value="Ensembl"/>
</dbReference>
<dbReference type="GO" id="GO:0043068">
    <property type="term" value="P:positive regulation of programmed cell death"/>
    <property type="evidence" value="ECO:0000315"/>
    <property type="project" value="UniProtKB"/>
</dbReference>
<dbReference type="GO" id="GO:0062100">
    <property type="term" value="P:positive regulation of programmed necrotic cell death"/>
    <property type="evidence" value="ECO:0000315"/>
    <property type="project" value="BHF-UCL"/>
</dbReference>
<dbReference type="GO" id="GO:0001934">
    <property type="term" value="P:positive regulation of protein phosphorylation"/>
    <property type="evidence" value="ECO:0000315"/>
    <property type="project" value="UniProtKB"/>
</dbReference>
<dbReference type="GO" id="GO:2000379">
    <property type="term" value="P:positive regulation of reactive oxygen species metabolic process"/>
    <property type="evidence" value="ECO:0000304"/>
    <property type="project" value="BHF-UCL"/>
</dbReference>
<dbReference type="GO" id="GO:0045944">
    <property type="term" value="P:positive regulation of transcription by RNA polymerase II"/>
    <property type="evidence" value="ECO:0000314"/>
    <property type="project" value="UniProtKB"/>
</dbReference>
<dbReference type="GO" id="GO:0032760">
    <property type="term" value="P:positive regulation of tumor necrosis factor production"/>
    <property type="evidence" value="ECO:0000314"/>
    <property type="project" value="BHF-UCL"/>
</dbReference>
<dbReference type="GO" id="GO:1903265">
    <property type="term" value="P:positive regulation of tumor necrosis factor-mediated signaling pathway"/>
    <property type="evidence" value="ECO:0007669"/>
    <property type="project" value="Ensembl"/>
</dbReference>
<dbReference type="GO" id="GO:0097300">
    <property type="term" value="P:programmed necrotic cell death"/>
    <property type="evidence" value="ECO:0000250"/>
    <property type="project" value="ARUK-UCL"/>
</dbReference>
<dbReference type="GO" id="GO:0046777">
    <property type="term" value="P:protein autophosphorylation"/>
    <property type="evidence" value="ECO:0000315"/>
    <property type="project" value="UniProtKB"/>
</dbReference>
<dbReference type="GO" id="GO:0030163">
    <property type="term" value="P:protein catabolic process"/>
    <property type="evidence" value="ECO:0000314"/>
    <property type="project" value="UniProtKB"/>
</dbReference>
<dbReference type="GO" id="GO:0006979">
    <property type="term" value="P:response to oxidative stress"/>
    <property type="evidence" value="ECO:0000315"/>
    <property type="project" value="BHF-UCL"/>
</dbReference>
<dbReference type="GO" id="GO:0034612">
    <property type="term" value="P:response to tumor necrosis factor"/>
    <property type="evidence" value="ECO:0000315"/>
    <property type="project" value="BHF-UCL"/>
</dbReference>
<dbReference type="GO" id="GO:0097343">
    <property type="term" value="P:ripoptosome assembly"/>
    <property type="evidence" value="ECO:0000315"/>
    <property type="project" value="UniProtKB"/>
</dbReference>
<dbReference type="GO" id="GO:1901026">
    <property type="term" value="P:ripoptosome assembly involved in necroptotic process"/>
    <property type="evidence" value="ECO:0007669"/>
    <property type="project" value="Ensembl"/>
</dbReference>
<dbReference type="GO" id="GO:0070231">
    <property type="term" value="P:T cell apoptotic process"/>
    <property type="evidence" value="ECO:0000250"/>
    <property type="project" value="UniProtKB"/>
</dbReference>
<dbReference type="GO" id="GO:0033209">
    <property type="term" value="P:tumor necrosis factor-mediated signaling pathway"/>
    <property type="evidence" value="ECO:0000305"/>
    <property type="project" value="BHF-UCL"/>
</dbReference>
<dbReference type="CDD" id="cd08777">
    <property type="entry name" value="Death_RIP1"/>
    <property type="match status" value="1"/>
</dbReference>
<dbReference type="CDD" id="cd14027">
    <property type="entry name" value="STKc_RIP1"/>
    <property type="match status" value="1"/>
</dbReference>
<dbReference type="FunFam" id="1.10.533.10:FF:000052">
    <property type="entry name" value="Putative receptor-interacting serine/threonine-protein kinase 1"/>
    <property type="match status" value="1"/>
</dbReference>
<dbReference type="FunFam" id="1.10.510.10:FF:000472">
    <property type="entry name" value="Receptor interacting serine/threonine kinase 1"/>
    <property type="match status" value="1"/>
</dbReference>
<dbReference type="Gene3D" id="1.10.533.10">
    <property type="entry name" value="Death Domain, Fas"/>
    <property type="match status" value="1"/>
</dbReference>
<dbReference type="Gene3D" id="1.10.510.10">
    <property type="entry name" value="Transferase(Phosphotransferase) domain 1"/>
    <property type="match status" value="1"/>
</dbReference>
<dbReference type="InterPro" id="IPR011029">
    <property type="entry name" value="DEATH-like_dom_sf"/>
</dbReference>
<dbReference type="InterPro" id="IPR000488">
    <property type="entry name" value="Death_dom"/>
</dbReference>
<dbReference type="InterPro" id="IPR011009">
    <property type="entry name" value="Kinase-like_dom_sf"/>
</dbReference>
<dbReference type="InterPro" id="IPR000719">
    <property type="entry name" value="Prot_kinase_dom"/>
</dbReference>
<dbReference type="InterPro" id="IPR037934">
    <property type="entry name" value="RIP1_Death"/>
</dbReference>
<dbReference type="InterPro" id="IPR001245">
    <property type="entry name" value="Ser-Thr/Tyr_kinase_cat_dom"/>
</dbReference>
<dbReference type="InterPro" id="IPR008271">
    <property type="entry name" value="Ser/Thr_kinase_AS"/>
</dbReference>
<dbReference type="InterPro" id="IPR051681">
    <property type="entry name" value="Ser/Thr_Kinases-Pseudokinases"/>
</dbReference>
<dbReference type="PANTHER" id="PTHR44329:SF6">
    <property type="entry name" value="RECEPTOR-INTERACTING SERINE_THREONINE-PROTEIN KINASE 1"/>
    <property type="match status" value="1"/>
</dbReference>
<dbReference type="PANTHER" id="PTHR44329">
    <property type="entry name" value="SERINE/THREONINE-PROTEIN KINASE TNNI3K-RELATED"/>
    <property type="match status" value="1"/>
</dbReference>
<dbReference type="Pfam" id="PF00531">
    <property type="entry name" value="Death"/>
    <property type="match status" value="1"/>
</dbReference>
<dbReference type="Pfam" id="PF07714">
    <property type="entry name" value="PK_Tyr_Ser-Thr"/>
    <property type="match status" value="1"/>
</dbReference>
<dbReference type="PRINTS" id="PR00109">
    <property type="entry name" value="TYRKINASE"/>
</dbReference>
<dbReference type="SMART" id="SM00005">
    <property type="entry name" value="DEATH"/>
    <property type="match status" value="1"/>
</dbReference>
<dbReference type="SMART" id="SM00220">
    <property type="entry name" value="S_TKc"/>
    <property type="match status" value="1"/>
</dbReference>
<dbReference type="SUPFAM" id="SSF47986">
    <property type="entry name" value="DEATH domain"/>
    <property type="match status" value="1"/>
</dbReference>
<dbReference type="SUPFAM" id="SSF56112">
    <property type="entry name" value="Protein kinase-like (PK-like)"/>
    <property type="match status" value="1"/>
</dbReference>
<dbReference type="PROSITE" id="PS50017">
    <property type="entry name" value="DEATH_DOMAIN"/>
    <property type="match status" value="1"/>
</dbReference>
<dbReference type="PROSITE" id="PS50011">
    <property type="entry name" value="PROTEIN_KINASE_DOM"/>
    <property type="match status" value="1"/>
</dbReference>
<dbReference type="PROSITE" id="PS00108">
    <property type="entry name" value="PROTEIN_KINASE_ST"/>
    <property type="match status" value="1"/>
</dbReference>
<gene>
    <name evidence="63" type="primary">RIPK1</name>
    <name evidence="60" type="synonym">RIP</name>
    <name evidence="59" type="synonym">RIP1</name>
</gene>
<reference key="1">
    <citation type="journal article" date="1996" name="Immunity">
        <title>TNF-dependent recruitment of the protein kinase RIP to the TNF receptor-1 signaling complex.</title>
        <authorList>
            <person name="Hsu H."/>
            <person name="Huang J."/>
            <person name="Shu H.-B."/>
            <person name="Baichwal V.R."/>
            <person name="Goeddel D.V."/>
        </authorList>
    </citation>
    <scope>NUCLEOTIDE SEQUENCE [MRNA] (ISOFORM 1)</scope>
    <scope>CATALYTIC ACTIVITY</scope>
    <scope>AUTOPHOSPHORYLATION</scope>
    <scope>MUTAGENESIS OF LYS-45</scope>
    <scope>INTERACTION WITH TRADD; TRAF1; TRAF2 AND TRAF3</scope>
    <scope>VARIANT VAL-438</scope>
    <source>
        <tissue>Umbilical vein endothelial cell</tissue>
    </source>
</reference>
<reference key="2">
    <citation type="submission" date="1998-08" db="EMBL/GenBank/DDBJ databases">
        <authorList>
            <person name="Huang J."/>
            <person name="Hsu H."/>
            <person name="Baichwal V.R."/>
            <person name="Goeddel D.V."/>
        </authorList>
    </citation>
    <scope>SEQUENCE REVISION TO 120</scope>
</reference>
<reference key="3">
    <citation type="journal article" date="2004" name="Nat. Genet.">
        <title>Complete sequencing and characterization of 21,243 full-length human cDNAs.</title>
        <authorList>
            <person name="Ota T."/>
            <person name="Suzuki Y."/>
            <person name="Nishikawa T."/>
            <person name="Otsuki T."/>
            <person name="Sugiyama T."/>
            <person name="Irie R."/>
            <person name="Wakamatsu A."/>
            <person name="Hayashi K."/>
            <person name="Sato H."/>
            <person name="Nagai K."/>
            <person name="Kimura K."/>
            <person name="Makita H."/>
            <person name="Sekine M."/>
            <person name="Obayashi M."/>
            <person name="Nishi T."/>
            <person name="Shibahara T."/>
            <person name="Tanaka T."/>
            <person name="Ishii S."/>
            <person name="Yamamoto J."/>
            <person name="Saito K."/>
            <person name="Kawai Y."/>
            <person name="Isono Y."/>
            <person name="Nakamura Y."/>
            <person name="Nagahari K."/>
            <person name="Murakami K."/>
            <person name="Yasuda T."/>
            <person name="Iwayanagi T."/>
            <person name="Wagatsuma M."/>
            <person name="Shiratori A."/>
            <person name="Sudo H."/>
            <person name="Hosoiri T."/>
            <person name="Kaku Y."/>
            <person name="Kodaira H."/>
            <person name="Kondo H."/>
            <person name="Sugawara M."/>
            <person name="Takahashi M."/>
            <person name="Kanda K."/>
            <person name="Yokoi T."/>
            <person name="Furuya T."/>
            <person name="Kikkawa E."/>
            <person name="Omura Y."/>
            <person name="Abe K."/>
            <person name="Kamihara K."/>
            <person name="Katsuta N."/>
            <person name="Sato K."/>
            <person name="Tanikawa M."/>
            <person name="Yamazaki M."/>
            <person name="Ninomiya K."/>
            <person name="Ishibashi T."/>
            <person name="Yamashita H."/>
            <person name="Murakawa K."/>
            <person name="Fujimori K."/>
            <person name="Tanai H."/>
            <person name="Kimata M."/>
            <person name="Watanabe M."/>
            <person name="Hiraoka S."/>
            <person name="Chiba Y."/>
            <person name="Ishida S."/>
            <person name="Ono Y."/>
            <person name="Takiguchi S."/>
            <person name="Watanabe S."/>
            <person name="Yosida M."/>
            <person name="Hotuta T."/>
            <person name="Kusano J."/>
            <person name="Kanehori K."/>
            <person name="Takahashi-Fujii A."/>
            <person name="Hara H."/>
            <person name="Tanase T.-O."/>
            <person name="Nomura Y."/>
            <person name="Togiya S."/>
            <person name="Komai F."/>
            <person name="Hara R."/>
            <person name="Takeuchi K."/>
            <person name="Arita M."/>
            <person name="Imose N."/>
            <person name="Musashino K."/>
            <person name="Yuuki H."/>
            <person name="Oshima A."/>
            <person name="Sasaki N."/>
            <person name="Aotsuka S."/>
            <person name="Yoshikawa Y."/>
            <person name="Matsunawa H."/>
            <person name="Ichihara T."/>
            <person name="Shiohata N."/>
            <person name="Sano S."/>
            <person name="Moriya S."/>
            <person name="Momiyama H."/>
            <person name="Satoh N."/>
            <person name="Takami S."/>
            <person name="Terashima Y."/>
            <person name="Suzuki O."/>
            <person name="Nakagawa S."/>
            <person name="Senoh A."/>
            <person name="Mizoguchi H."/>
            <person name="Goto Y."/>
            <person name="Shimizu F."/>
            <person name="Wakebe H."/>
            <person name="Hishigaki H."/>
            <person name="Watanabe T."/>
            <person name="Sugiyama A."/>
            <person name="Takemoto M."/>
            <person name="Kawakami B."/>
            <person name="Yamazaki M."/>
            <person name="Watanabe K."/>
            <person name="Kumagai A."/>
            <person name="Itakura S."/>
            <person name="Fukuzumi Y."/>
            <person name="Fujimori Y."/>
            <person name="Komiyama M."/>
            <person name="Tashiro H."/>
            <person name="Tanigami A."/>
            <person name="Fujiwara T."/>
            <person name="Ono T."/>
            <person name="Yamada K."/>
            <person name="Fujii Y."/>
            <person name="Ozaki K."/>
            <person name="Hirao M."/>
            <person name="Ohmori Y."/>
            <person name="Kawabata A."/>
            <person name="Hikiji T."/>
            <person name="Kobatake N."/>
            <person name="Inagaki H."/>
            <person name="Ikema Y."/>
            <person name="Okamoto S."/>
            <person name="Okitani R."/>
            <person name="Kawakami T."/>
            <person name="Noguchi S."/>
            <person name="Itoh T."/>
            <person name="Shigeta K."/>
            <person name="Senba T."/>
            <person name="Matsumura K."/>
            <person name="Nakajima Y."/>
            <person name="Mizuno T."/>
            <person name="Morinaga M."/>
            <person name="Sasaki M."/>
            <person name="Togashi T."/>
            <person name="Oyama M."/>
            <person name="Hata H."/>
            <person name="Watanabe M."/>
            <person name="Komatsu T."/>
            <person name="Mizushima-Sugano J."/>
            <person name="Satoh T."/>
            <person name="Shirai Y."/>
            <person name="Takahashi Y."/>
            <person name="Nakagawa K."/>
            <person name="Okumura K."/>
            <person name="Nagase T."/>
            <person name="Nomura N."/>
            <person name="Kikuchi H."/>
            <person name="Masuho Y."/>
            <person name="Yamashita R."/>
            <person name="Nakai K."/>
            <person name="Yada T."/>
            <person name="Nakamura Y."/>
            <person name="Ohara O."/>
            <person name="Isogai T."/>
            <person name="Sugano S."/>
        </authorList>
    </citation>
    <scope>NUCLEOTIDE SEQUENCE [LARGE SCALE MRNA] (ISOFORM 1)</scope>
    <scope>NUCLEOTIDE SEQUENCE [LARGE SCALE MRNA] OF 15-671 (ISOFORM 2)</scope>
    <source>
        <tissue>Adrenal gland</tissue>
        <tissue>Uterus</tissue>
    </source>
</reference>
<reference key="4">
    <citation type="submission" date="2004-07" db="EMBL/GenBank/DDBJ databases">
        <authorList>
            <consortium name="SeattleSNPs variation discovery resource"/>
        </authorList>
    </citation>
    <scope>NUCLEOTIDE SEQUENCE [GENOMIC DNA]</scope>
    <scope>VARIANT LYS-234</scope>
</reference>
<reference key="5">
    <citation type="journal article" date="2003" name="Nature">
        <title>The DNA sequence and analysis of human chromosome 6.</title>
        <authorList>
            <person name="Mungall A.J."/>
            <person name="Palmer S.A."/>
            <person name="Sims S.K."/>
            <person name="Edwards C.A."/>
            <person name="Ashurst J.L."/>
            <person name="Wilming L."/>
            <person name="Jones M.C."/>
            <person name="Horton R."/>
            <person name="Hunt S.E."/>
            <person name="Scott C.E."/>
            <person name="Gilbert J.G.R."/>
            <person name="Clamp M.E."/>
            <person name="Bethel G."/>
            <person name="Milne S."/>
            <person name="Ainscough R."/>
            <person name="Almeida J.P."/>
            <person name="Ambrose K.D."/>
            <person name="Andrews T.D."/>
            <person name="Ashwell R.I.S."/>
            <person name="Babbage A.K."/>
            <person name="Bagguley C.L."/>
            <person name="Bailey J."/>
            <person name="Banerjee R."/>
            <person name="Barker D.J."/>
            <person name="Barlow K.F."/>
            <person name="Bates K."/>
            <person name="Beare D.M."/>
            <person name="Beasley H."/>
            <person name="Beasley O."/>
            <person name="Bird C.P."/>
            <person name="Blakey S.E."/>
            <person name="Bray-Allen S."/>
            <person name="Brook J."/>
            <person name="Brown A.J."/>
            <person name="Brown J.Y."/>
            <person name="Burford D.C."/>
            <person name="Burrill W."/>
            <person name="Burton J."/>
            <person name="Carder C."/>
            <person name="Carter N.P."/>
            <person name="Chapman J.C."/>
            <person name="Clark S.Y."/>
            <person name="Clark G."/>
            <person name="Clee C.M."/>
            <person name="Clegg S."/>
            <person name="Cobley V."/>
            <person name="Collier R.E."/>
            <person name="Collins J.E."/>
            <person name="Colman L.K."/>
            <person name="Corby N.R."/>
            <person name="Coville G.J."/>
            <person name="Culley K.M."/>
            <person name="Dhami P."/>
            <person name="Davies J."/>
            <person name="Dunn M."/>
            <person name="Earthrowl M.E."/>
            <person name="Ellington A.E."/>
            <person name="Evans K.A."/>
            <person name="Faulkner L."/>
            <person name="Francis M.D."/>
            <person name="Frankish A."/>
            <person name="Frankland J."/>
            <person name="French L."/>
            <person name="Garner P."/>
            <person name="Garnett J."/>
            <person name="Ghori M.J."/>
            <person name="Gilby L.M."/>
            <person name="Gillson C.J."/>
            <person name="Glithero R.J."/>
            <person name="Grafham D.V."/>
            <person name="Grant M."/>
            <person name="Gribble S."/>
            <person name="Griffiths C."/>
            <person name="Griffiths M.N.D."/>
            <person name="Hall R."/>
            <person name="Halls K.S."/>
            <person name="Hammond S."/>
            <person name="Harley J.L."/>
            <person name="Hart E.A."/>
            <person name="Heath P.D."/>
            <person name="Heathcott R."/>
            <person name="Holmes S.J."/>
            <person name="Howden P.J."/>
            <person name="Howe K.L."/>
            <person name="Howell G.R."/>
            <person name="Huckle E."/>
            <person name="Humphray S.J."/>
            <person name="Humphries M.D."/>
            <person name="Hunt A.R."/>
            <person name="Johnson C.M."/>
            <person name="Joy A.A."/>
            <person name="Kay M."/>
            <person name="Keenan S.J."/>
            <person name="Kimberley A.M."/>
            <person name="King A."/>
            <person name="Laird G.K."/>
            <person name="Langford C."/>
            <person name="Lawlor S."/>
            <person name="Leongamornlert D.A."/>
            <person name="Leversha M."/>
            <person name="Lloyd C.R."/>
            <person name="Lloyd D.M."/>
            <person name="Loveland J.E."/>
            <person name="Lovell J."/>
            <person name="Martin S."/>
            <person name="Mashreghi-Mohammadi M."/>
            <person name="Maslen G.L."/>
            <person name="Matthews L."/>
            <person name="McCann O.T."/>
            <person name="McLaren S.J."/>
            <person name="McLay K."/>
            <person name="McMurray A."/>
            <person name="Moore M.J.F."/>
            <person name="Mullikin J.C."/>
            <person name="Niblett D."/>
            <person name="Nickerson T."/>
            <person name="Novik K.L."/>
            <person name="Oliver K."/>
            <person name="Overton-Larty E.K."/>
            <person name="Parker A."/>
            <person name="Patel R."/>
            <person name="Pearce A.V."/>
            <person name="Peck A.I."/>
            <person name="Phillimore B.J.C.T."/>
            <person name="Phillips S."/>
            <person name="Plumb R.W."/>
            <person name="Porter K.M."/>
            <person name="Ramsey Y."/>
            <person name="Ranby S.A."/>
            <person name="Rice C.M."/>
            <person name="Ross M.T."/>
            <person name="Searle S.M."/>
            <person name="Sehra H.K."/>
            <person name="Sheridan E."/>
            <person name="Skuce C.D."/>
            <person name="Smith S."/>
            <person name="Smith M."/>
            <person name="Spraggon L."/>
            <person name="Squares S.L."/>
            <person name="Steward C.A."/>
            <person name="Sycamore N."/>
            <person name="Tamlyn-Hall G."/>
            <person name="Tester J."/>
            <person name="Theaker A.J."/>
            <person name="Thomas D.W."/>
            <person name="Thorpe A."/>
            <person name="Tracey A."/>
            <person name="Tromans A."/>
            <person name="Tubby B."/>
            <person name="Wall M."/>
            <person name="Wallis J.M."/>
            <person name="West A.P."/>
            <person name="White S.S."/>
            <person name="Whitehead S.L."/>
            <person name="Whittaker H."/>
            <person name="Wild A."/>
            <person name="Willey D.J."/>
            <person name="Wilmer T.E."/>
            <person name="Wood J.M."/>
            <person name="Wray P.W."/>
            <person name="Wyatt J.C."/>
            <person name="Young L."/>
            <person name="Younger R.M."/>
            <person name="Bentley D.R."/>
            <person name="Coulson A."/>
            <person name="Durbin R.M."/>
            <person name="Hubbard T."/>
            <person name="Sulston J.E."/>
            <person name="Dunham I."/>
            <person name="Rogers J."/>
            <person name="Beck S."/>
        </authorList>
    </citation>
    <scope>NUCLEOTIDE SEQUENCE [LARGE SCALE GENOMIC DNA]</scope>
</reference>
<reference key="6">
    <citation type="journal article" date="2004" name="Genome Res.">
        <title>The status, quality, and expansion of the NIH full-length cDNA project: the Mammalian Gene Collection (MGC).</title>
        <authorList>
            <consortium name="The MGC Project Team"/>
        </authorList>
    </citation>
    <scope>NUCLEOTIDE SEQUENCE [LARGE SCALE MRNA] (ISOFORM 1)</scope>
    <scope>VARIANT VAL-438</scope>
</reference>
<reference key="7">
    <citation type="submission" date="2005-03" db="EMBL/GenBank/DDBJ databases">
        <title>Homo sapiens protein coding cDNA.</title>
        <authorList>
            <person name="Totoki Y."/>
            <person name="Toyoda A."/>
            <person name="Takeda T."/>
            <person name="Sakaki Y."/>
            <person name="Tanaka A."/>
            <person name="Yokoyama S."/>
            <person name="Ohara O."/>
            <person name="Nagase T."/>
            <person name="Kikuno R.F."/>
        </authorList>
    </citation>
    <scope>NUCLEOTIDE SEQUENCE [LARGE SCALE MRNA] OF 153-671</scope>
    <source>
        <tissue>Brain</tissue>
    </source>
</reference>
<reference key="8">
    <citation type="journal article" date="1995" name="Cell">
        <title>RIP: a novel protein containing a death domain that interacts with Fas/APO-1 (CD95) in yeast and causes cell death.</title>
        <authorList>
            <person name="Stanger B.Z."/>
            <person name="Leder P."/>
            <person name="Lee T.-H."/>
            <person name="Kim E."/>
            <person name="Seed B."/>
        </authorList>
    </citation>
    <scope>NUCLEOTIDE SEQUENCE [MRNA] OF 300-671</scope>
    <scope>VARIANT VAL-438</scope>
    <source>
        <tissue>Leukemic T-cell</tissue>
    </source>
</reference>
<reference key="9">
    <citation type="journal article" date="1997" name="Cancer Res.">
        <title>CRADD, a novel human apoptotic adaptor molecule for caspase-2, and FasL/tumor necrosis factor receptor-interacting protein RIP.</title>
        <authorList>
            <person name="Ahmad M."/>
            <person name="Srinivasula S.M."/>
            <person name="Wang L."/>
            <person name="Talanian R.V."/>
            <person name="Litwack G."/>
            <person name="Fernandes-Alnemri T."/>
            <person name="Alnemri E.S."/>
        </authorList>
    </citation>
    <scope>INTERACTION WITH CRADD</scope>
    <scope>DOMAIN</scope>
</reference>
<reference key="10">
    <citation type="journal article" date="1999" name="Genes Dev.">
        <title>Cleavage of the death domain kinase RIP by caspase-8 prompts TNF-induced apoptosis.</title>
        <authorList>
            <person name="Lin Y."/>
            <person name="Devin A."/>
            <person name="Rodriguez Y."/>
            <person name="Liu Z.-G."/>
        </authorList>
    </citation>
    <scope>CLEAVAGE BY CASP8</scope>
    <scope>MUTAGENESIS OF ASP-324</scope>
</reference>
<reference key="11">
    <citation type="journal article" date="1999" name="EMBO J.">
        <title>The interaction of p62 with RIP links the atypical PKCs to NF-kappaB activation.</title>
        <authorList>
            <person name="Sanz L."/>
            <person name="Sanchez P."/>
            <person name="Lallena M.-J."/>
            <person name="Diaz-Meco M.T."/>
            <person name="Moscat J."/>
        </authorList>
    </citation>
    <scope>INTERACTION WITH SQSTM1 AND TRAF2</scope>
    <scope>DOMAIN DEATH</scope>
</reference>
<reference key="12">
    <citation type="journal article" date="1999" name="J. Biol. Chem.">
        <title>RIP3, a novel apoptosis-inducing kinase.</title>
        <authorList>
            <person name="Sun X."/>
            <person name="Lee J."/>
            <person name="Navas T."/>
            <person name="Baldwin D.T."/>
            <person name="Stewart T.A."/>
            <person name="Dixit V.M."/>
        </authorList>
    </citation>
    <scope>INTERACTION WITH RIPK3</scope>
</reference>
<reference key="13">
    <citation type="journal article" date="1999" name="Mol. Cell. Biol.">
        <title>The Epstein-Barr virus oncoprotein latent membrane protein 1 engages the tumor necrosis factor receptor-associated proteins TRADD and receptor-interacting protein (RIP) but does not induce apoptosis or require RIP for NF-kappaB activation.</title>
        <authorList>
            <person name="Izumi K.M."/>
            <person name="Cahir McFarland E."/>
            <person name="Ting A.T."/>
            <person name="Riley E.A."/>
            <person name="Seed B."/>
            <person name="Kieff E.D."/>
        </authorList>
    </citation>
    <scope>INTERACTION WITH BNLF1</scope>
</reference>
<reference key="14">
    <citation type="journal article" date="1999" name="Proc. Natl. Acad. Sci. U.S.A.">
        <title>Identification of a cell protein (FIP-3) as a modulator of NF-kappaB activity and as a target of an adenovirus inhibitor of tumor necrosis factor alpha-induced apoptosis.</title>
        <authorList>
            <person name="Li Y."/>
            <person name="Kang J."/>
            <person name="Friedman J."/>
            <person name="Tarassishin L."/>
            <person name="Ye J."/>
            <person name="Kovalenko A."/>
            <person name="Wallach D."/>
            <person name="Horwitz M.S."/>
        </authorList>
    </citation>
    <scope>INTERACTION WITH IKBKG</scope>
</reference>
<reference key="15">
    <citation type="journal article" date="2000" name="Nat. Immunol.">
        <title>Fas triggers an alternative, caspase-8-independent cell death pathway using the kinase RIP as effector molecule.</title>
        <authorList>
            <person name="Holler N."/>
            <person name="Zaru R."/>
            <person name="Micheau O."/>
            <person name="Thome M."/>
            <person name="Attinger A."/>
            <person name="Valitutti S."/>
            <person name="Bodmer J.L."/>
            <person name="Schneider P."/>
            <person name="Seed B."/>
            <person name="Tschopp J."/>
        </authorList>
    </citation>
    <scope>FUNCTION</scope>
</reference>
<reference key="16">
    <citation type="journal article" date="2001" name="J. Biol. Chem.">
        <title>The epidermal growth factor receptor engages receptor interacting protein and nuclear factor-kappa B (NF-kappa B)-inducing kinase to activate NF-kappa B. Identification of a novel receptor-tyrosine kinase signalosome.</title>
        <authorList>
            <person name="Habib A.A."/>
            <person name="Chatterjee S."/>
            <person name="Park S.-K."/>
            <person name="Ratan R.R."/>
            <person name="Lefebvre S."/>
            <person name="Vartanian T."/>
        </authorList>
    </citation>
    <scope>INTERACTION WITH EGFR</scope>
</reference>
<reference key="17">
    <citation type="journal article" date="2002" name="J. Biol. Chem.">
        <title>A novel zinc finger protein interacts with receptor-interacting protein (RIP) and inhibits tumor necrosis factor (TNF)- and IL1-induced NF-kappa B activation.</title>
        <authorList>
            <person name="Chen D."/>
            <person name="Li X."/>
            <person name="Zhai Z."/>
            <person name="Shu H.-B."/>
        </authorList>
    </citation>
    <scope>INTERACTION WITH RNF216</scope>
</reference>
<reference key="18">
    <citation type="journal article" date="2002" name="J. Biol. Chem.">
        <title>Identification of a novel homotypic interaction motif required for the phosphorylation of receptor-interacting protein (RIP) by RIP3.</title>
        <authorList>
            <person name="Sun X."/>
            <person name="Yin J."/>
            <person name="Starovasnik M.A."/>
            <person name="Fairbrother W.J."/>
            <person name="Dixit V.M."/>
        </authorList>
    </citation>
    <scope>RIP HOMOTYPIC INTERACTION MOTIF</scope>
    <scope>INTERACTION WITH RIPK3</scope>
</reference>
<reference key="19">
    <citation type="journal article" date="2004" name="Anal. Chem.">
        <title>Robust phosphoproteomic profiling of tyrosine phosphorylation sites from human T cells using immobilized metal affinity chromatography and tandem mass spectrometry.</title>
        <authorList>
            <person name="Brill L.M."/>
            <person name="Salomon A.R."/>
            <person name="Ficarro S.B."/>
            <person name="Mukherji M."/>
            <person name="Stettler-Gill M."/>
            <person name="Peters E.C."/>
        </authorList>
    </citation>
    <scope>PHOSPHORYLATION [LARGE SCALE ANALYSIS] AT TYR-384</scope>
    <scope>IDENTIFICATION BY MASS SPECTROMETRY [LARGE SCALE ANALYSIS]</scope>
    <source>
        <tissue>Leukemic T-cell</tissue>
    </source>
</reference>
<reference key="20">
    <citation type="journal article" date="2004" name="J. Biol. Chem.">
        <title>ZNF216 is an A20-like and IkappaB kinase gamma-interacting inhibitor of NFkappaB activation.</title>
        <authorList>
            <person name="Huang J."/>
            <person name="Teng L."/>
            <person name="Li L."/>
            <person name="Liu T."/>
            <person name="Li L."/>
            <person name="Chen D."/>
            <person name="Xu L.-G."/>
            <person name="Zhai Z."/>
            <person name="Shu H.-B."/>
        </authorList>
    </citation>
    <scope>INTERACTION WITH ZFAND5</scope>
</reference>
<reference key="21">
    <citation type="journal article" date="2004" name="J. Biol. Chem.">
        <title>AIP1/DAB2IP, a novel member of the Ras-GAP family, transduces TRAF2-induced ASK1-JNK activation.</title>
        <authorList>
            <person name="Zhang H."/>
            <person name="Zhang R."/>
            <person name="Luo Y."/>
            <person name="D'Alessio A."/>
            <person name="Pober J.S."/>
            <person name="Min W."/>
        </authorList>
    </citation>
    <scope>INTERACTION WITH DAB2IP</scope>
</reference>
<reference key="22">
    <citation type="journal article" date="2004" name="Nature">
        <title>De-ubiquitination and ubiquitin ligase domains of A20 downregulate NF-kappaB signalling.</title>
        <authorList>
            <person name="Wertz I.E."/>
            <person name="O'Rourke K.M."/>
            <person name="Zhou H."/>
            <person name="Eby M."/>
            <person name="Aravind L."/>
            <person name="Seshagiri S."/>
            <person name="Wu P."/>
            <person name="Wiesmann C."/>
            <person name="Baker R."/>
            <person name="Boone D.L."/>
            <person name="Ma A."/>
            <person name="Koonin E.V."/>
            <person name="Dixit V.M."/>
        </authorList>
    </citation>
    <scope>UBIQUITINATION BY TRAF2</scope>
    <scope>DEUBIQUITINATION BY TNFAIP3</scope>
</reference>
<reference key="23">
    <citation type="journal article" date="2005" name="Nat. Immunol.">
        <title>IPS-1, an adaptor triggering RIG-I- and Mda5-mediated type I interferon induction.</title>
        <authorList>
            <person name="Kawai T."/>
            <person name="Takahashi K."/>
            <person name="Sato S."/>
            <person name="Coban C."/>
            <person name="Kumar H."/>
            <person name="Kato H."/>
            <person name="Ishii K.J."/>
            <person name="Takeuchi O."/>
            <person name="Akira S."/>
        </authorList>
    </citation>
    <scope>INTERACTION WITH MAVS</scope>
</reference>
<reference key="24">
    <citation type="journal article" date="2006" name="Mol. Cell">
        <title>Activation of IKK by TNFalpha requires site-specific ubiquitination of RIP1 and polyubiquitin binding by NEMO.</title>
        <authorList>
            <person name="Ea C.K."/>
            <person name="Deng L."/>
            <person name="Xia Z.P."/>
            <person name="Pineda G."/>
            <person name="Chen Z.J."/>
        </authorList>
    </citation>
    <scope>UBIQUITINATION AT LYS-377</scope>
    <scope>MUTAGENESIS OF LYS-377</scope>
</reference>
<reference key="25">
    <citation type="journal article" date="2007" name="EMBO J.">
        <title>Essential role for TAX1BP1 in the termination of TNF-alpha-, IL-1- and LPS-mediated NF-kappaB and JNK signaling.</title>
        <authorList>
            <person name="Shembade N."/>
            <person name="Harhaj N.S."/>
            <person name="Liebl D.J."/>
            <person name="Harhaj E.W."/>
        </authorList>
    </citation>
    <scope>INTERACTION WITH TAX1BP1</scope>
    <scope>FUNCTION</scope>
    <scope>UBIQUITINATION</scope>
</reference>
<reference key="26">
    <citation type="journal article" date="2007" name="Cell Death Differ.">
        <title>RIP1, a kinase on the crossroads of a cell's decision to live or die.</title>
        <authorList>
            <person name="Festjens N."/>
            <person name="Vanden Berghe T."/>
            <person name="Cornelis S."/>
            <person name="Vandenabeele P."/>
        </authorList>
    </citation>
    <scope>REVIEW</scope>
</reference>
<reference key="27">
    <citation type="journal article" date="2007" name="J. Biol. Chem.">
        <title>RIP1-mediated AIP1 phosphorylation at a 14-3-3-binding site is critical for tumor necrosis factor-induced ASK1-JNK/p38 activation.</title>
        <authorList>
            <person name="Zhang H."/>
            <person name="Zhang H."/>
            <person name="Lin Y."/>
            <person name="Li J."/>
            <person name="Pober J.S."/>
            <person name="Min W."/>
        </authorList>
    </citation>
    <scope>FUNCTION IN PHOSPHORYLATION OF DAB2IP</scope>
    <scope>INTERACTION WITH DAB2IP</scope>
</reference>
<reference key="28">
    <citation type="journal article" date="2007" name="J. Biol. Chem.">
        <title>RBCK1 negatively regulates tumor necrosis factor- and interleukin-1-triggered NF-kappaB activation by targeting TAB2/3 for degradation.</title>
        <authorList>
            <person name="Tian Y."/>
            <person name="Zhang Y."/>
            <person name="Zhong B."/>
            <person name="Wang Y.Y."/>
            <person name="Diao F.C."/>
            <person name="Wang R.P."/>
            <person name="Zhang M."/>
            <person name="Chen D.Y."/>
            <person name="Zhai Z.H."/>
            <person name="Shu H.B."/>
        </authorList>
    </citation>
    <scope>INTERACTION WITH RBCK1</scope>
</reference>
<reference key="29">
    <citation type="journal article" date="2008" name="Curr. Biol.">
        <title>CARP-2 is an endosome-associated ubiquitin ligase for RIP and regulates TNF-induced NF-kappaB activation.</title>
        <authorList>
            <person name="Liao W."/>
            <person name="Xiao Q."/>
            <person name="Tchikov V."/>
            <person name="Fujita K."/>
            <person name="Yang W."/>
            <person name="Wincovitch S."/>
            <person name="Garfield S."/>
            <person name="Conze D."/>
            <person name="El-Deiry W.S."/>
            <person name="Schuetze S."/>
            <person name="Srinivasula S.M."/>
        </authorList>
    </citation>
    <scope>INTERACTION WITH RFFL</scope>
    <scope>UBIQUITINATION BY RFFL</scope>
</reference>
<reference key="30">
    <citation type="journal article" date="2008" name="Nat. Chem. Biol.">
        <title>Identification of RIP1 kinase as a specific cellular target of necrostatins.</title>
        <authorList>
            <person name="Degterev A."/>
            <person name="Hitomi J."/>
            <person name="Germscheid M."/>
            <person name="Ch'en I.L."/>
            <person name="Korkina O."/>
            <person name="Teng X."/>
            <person name="Abbott D."/>
            <person name="Cuny G.D."/>
            <person name="Yuan C."/>
            <person name="Wagner G."/>
            <person name="Hedrick S.M."/>
            <person name="Gerber S.A."/>
            <person name="Lugovskoy A."/>
            <person name="Yuan J."/>
        </authorList>
    </citation>
    <scope>MUTAGENESIS OF SER-161</scope>
    <scope>INHIBITION BY NECROSTATIN-1</scope>
    <scope>PHOSPHORYLATION AT SER-6; SER-20; SER-25; SER-161; SER-166; SER-303; SER-320 AND SER-333</scope>
</reference>
<reference key="31">
    <citation type="journal article" date="2008" name="J. Biol. Chem.">
        <title>Cytomegalovirus M45 cell death suppression requires receptor-interacting protein (RIP) homotypic interaction motif (RHIM)-dependent interaction with RIP1.</title>
        <authorList>
            <person name="Upton J.W."/>
            <person name="Kaiser W.J."/>
            <person name="Mocarski E.S."/>
        </authorList>
    </citation>
    <scope>INTERACTION WITH MURID HERPESVIRUS 1 PROTEIN RIR1</scope>
</reference>
<reference key="32">
    <citation type="journal article" date="2008" name="Proc. Natl. Acad. Sci. U.S.A.">
        <title>A quantitative atlas of mitotic phosphorylation.</title>
        <authorList>
            <person name="Dephoure N."/>
            <person name="Zhou C."/>
            <person name="Villen J."/>
            <person name="Beausoleil S.A."/>
            <person name="Bakalarski C.E."/>
            <person name="Elledge S.J."/>
            <person name="Gygi S.P."/>
        </authorList>
    </citation>
    <scope>PHOSPHORYLATION [LARGE SCALE ANALYSIS] AT SER-320</scope>
    <scope>IDENTIFICATION BY MASS SPECTROMETRY [LARGE SCALE ANALYSIS]</scope>
    <source>
        <tissue>Cervix carcinoma</tissue>
    </source>
</reference>
<reference key="33">
    <citation type="journal article" date="2009" name="Cell">
        <title>Phosphorylation-driven assembly of the RIP1-RIP3 complex regulates programmed necrosis and virus-induced inflammation.</title>
        <authorList>
            <person name="Cho Y.S."/>
            <person name="Challa S."/>
            <person name="Moquin D."/>
            <person name="Genga R."/>
            <person name="Ray T.D."/>
            <person name="Guildford M."/>
            <person name="Chan F.K."/>
        </authorList>
    </citation>
    <scope>FUNCTION</scope>
    <scope>PHOSPHORYLATION</scope>
</reference>
<reference key="34">
    <citation type="journal article" date="2009" name="Cell">
        <title>Receptor interacting protein kinase-3 determines cellular necrotic response to TNF-alpha.</title>
        <authorList>
            <person name="He S."/>
            <person name="Wang L."/>
            <person name="Miao L."/>
            <person name="Wang T."/>
            <person name="Du F."/>
            <person name="Zhao L."/>
            <person name="Wang X."/>
        </authorList>
    </citation>
    <scope>FUNCTION</scope>
    <scope>INTERACTION WITH RIPK3</scope>
</reference>
<reference key="35">
    <citation type="journal article" date="2009" name="Curr. Biol.">
        <title>Response: CARP1 regulates induction of NF-kappaB by TNFalpha.</title>
        <authorList>
            <person name="Liao W."/>
            <person name="Fujita K."/>
            <person name="Xiao Q."/>
            <person name="Tchikov V."/>
            <person name="Yang W."/>
            <person name="Gunsor M."/>
            <person name="Garfield S."/>
            <person name="Goldsmith P."/>
            <person name="El-Deiry W.S."/>
            <person name="Schuetze S."/>
            <person name="Srinivasula S.M."/>
        </authorList>
    </citation>
    <scope>INTERACTION WITH RNF34</scope>
    <scope>UBIQUITINATION BY RNF34</scope>
</reference>
<reference key="36">
    <citation type="journal article" date="2010" name="Sci. Signal.">
        <title>The role of the kinases RIP1 and RIP3 in TNF-induced necrosis.</title>
        <authorList>
            <person name="Vandenabeele P."/>
            <person name="Declercq W."/>
            <person name="Van Herreweghe F."/>
            <person name="Vanden Berghe T."/>
        </authorList>
    </citation>
    <scope>REVIEW</scope>
</reference>
<reference key="37">
    <citation type="journal article" date="2011" name="BMC Syst. Biol.">
        <title>Initial characterization of the human central proteome.</title>
        <authorList>
            <person name="Burkard T.R."/>
            <person name="Planyavsky M."/>
            <person name="Kaupe I."/>
            <person name="Breitwieser F.P."/>
            <person name="Buerckstuemmer T."/>
            <person name="Bennett K.L."/>
            <person name="Superti-Furga G."/>
            <person name="Colinge J."/>
        </authorList>
    </citation>
    <scope>IDENTIFICATION BY MASS SPECTROMETRY [LARGE SCALE ANALYSIS]</scope>
</reference>
<reference key="38">
    <citation type="journal article" date="2011" name="Nature">
        <title>Linear ubiquitination prevents inflammation and regulates immune signalling.</title>
        <authorList>
            <person name="Gerlach B."/>
            <person name="Cordier S.M."/>
            <person name="Schmukle A.C."/>
            <person name="Emmerich C.H."/>
            <person name="Rieser E."/>
            <person name="Haas T.L."/>
            <person name="Webb A.I."/>
            <person name="Rickard J.A."/>
            <person name="Anderton H."/>
            <person name="Wong W.W."/>
            <person name="Nachbur U."/>
            <person name="Gangoda L."/>
            <person name="Warnken U."/>
            <person name="Purcell A.W."/>
            <person name="Silke J."/>
            <person name="Walczak H."/>
        </authorList>
    </citation>
    <scope>UBIQUITINATION BY THE LUBAC COMPLEX</scope>
</reference>
<reference key="39">
    <citation type="journal article" date="2011" name="PLoS ONE">
        <title>cIAP1/2 are direct E3 ligases conjugating diverse types of ubiquitin chains to receptor interacting proteins kinases 1 to 4 (RIP1-4).</title>
        <authorList>
            <person name="Bertrand M.J."/>
            <person name="Lippens S."/>
            <person name="Staes A."/>
            <person name="Gilbert B."/>
            <person name="Roelandt R."/>
            <person name="De Medts J."/>
            <person name="Gevaert K."/>
            <person name="Declercq W."/>
            <person name="Vandenabeele P."/>
        </authorList>
    </citation>
    <scope>UBIQUITINATION BY BIRC2/C-IAP1 AND BIRC3/C-IAP2</scope>
    <scope>INTERACTION WITH BIRC2/C-IAP1; BIRC3/C-IAP2 AND XIAP/BIRC4</scope>
</reference>
<reference key="40">
    <citation type="journal article" date="2012" name="Cell">
        <title>The mitochondrial phosphatase PGAM5 functions at the convergence point of multiple necrotic death pathways.</title>
        <authorList>
            <person name="Wang Z."/>
            <person name="Jiang H."/>
            <person name="Chen S."/>
            <person name="Du F."/>
            <person name="Wang X."/>
        </authorList>
    </citation>
    <scope>IDENTIFICATION IN COMPLEX WITH PGAM5; RIPK3 AND MLKL</scope>
</reference>
<reference key="41">
    <citation type="journal article" date="2012" name="Inflamm. Bowel Dis.">
        <title>Control of NOD2 and Rip2-dependent innate immune activation by GEF-H1.</title>
        <authorList>
            <person name="Zhao Y."/>
            <person name="Alonso C."/>
            <person name="Ballester I."/>
            <person name="Song J.H."/>
            <person name="Chang S.Y."/>
            <person name="Guleng B."/>
            <person name="Arihiro S."/>
            <person name="Murray P.J."/>
            <person name="Xavier R."/>
            <person name="Kobayashi K.S."/>
            <person name="Reinecker H.C."/>
        </authorList>
    </citation>
    <scope>INTERACTION WITH ARHGEF2</scope>
</reference>
<reference key="42">
    <citation type="journal article" date="2013" name="PLoS Pathog.">
        <title>DDX24 negatively regulates cytosolic RNA-mediated innate immune signaling.</title>
        <authorList>
            <person name="Ma Z."/>
            <person name="Moore R."/>
            <person name="Xu X."/>
            <person name="Barber G.N."/>
        </authorList>
    </citation>
    <scope>INTERACTION WITH DDX24</scope>
</reference>
<reference key="43">
    <citation type="journal article" date="2013" name="Cell Death Differ.">
        <title>Intrinsic cleavage of receptor-interacting protein kinase-1 by caspase-6.</title>
        <authorList>
            <person name="van Raam B.J."/>
            <person name="Ehrnhoefer D.E."/>
            <person name="Hayden M.R."/>
            <person name="Salvesen G.S."/>
        </authorList>
    </citation>
    <scope>PROTEOLYTIC CLEAVAGE</scope>
</reference>
<reference key="44">
    <citation type="journal article" date="2013" name="J. Proteome Res.">
        <title>Toward a comprehensive characterization of a human cancer cell phosphoproteome.</title>
        <authorList>
            <person name="Zhou H."/>
            <person name="Di Palma S."/>
            <person name="Preisinger C."/>
            <person name="Peng M."/>
            <person name="Polat A.N."/>
            <person name="Heck A.J."/>
            <person name="Mohammed S."/>
        </authorList>
    </citation>
    <scope>PHOSPHORYLATION [LARGE SCALE ANALYSIS] AT SER-320</scope>
    <scope>IDENTIFICATION BY MASS SPECTROMETRY [LARGE SCALE ANALYSIS]</scope>
    <source>
        <tissue>Erythroleukemia</tissue>
    </source>
</reference>
<reference key="45">
    <citation type="journal article" date="2013" name="Mol. Cell. Biol.">
        <title>Ubiquitination-deubiquitination by the TRIM27-USP7 complex regulates tumor necrosis factor alpha-induced apoptosis.</title>
        <authorList>
            <person name="Zaman M.M."/>
            <person name="Nomura T."/>
            <person name="Takagi T."/>
            <person name="Okamura T."/>
            <person name="Jin W."/>
            <person name="Shinagawa T."/>
            <person name="Tanaka Y."/>
            <person name="Ishii S."/>
        </authorList>
    </citation>
    <scope>FUNCTION</scope>
    <scope>DEUBIQUITINATION BY USP7</scope>
</reference>
<reference key="46">
    <citation type="journal article" date="2013" name="Nature">
        <title>Pathogen blocks host death receptor signalling by arginine GlcNAcylation of death domains.</title>
        <authorList>
            <person name="Li S."/>
            <person name="Zhang L."/>
            <person name="Yao Q."/>
            <person name="Li L."/>
            <person name="Dong N."/>
            <person name="Rong J."/>
            <person name="Gao W."/>
            <person name="Ding X."/>
            <person name="Sun L."/>
            <person name="Chen X."/>
            <person name="Chen S."/>
            <person name="Shao F."/>
        </authorList>
    </citation>
    <scope>GLYCOSYLATION AT ARG-603 (MICROBIAL INFECTION)</scope>
</reference>
<reference key="47">
    <citation type="journal article" date="2014" name="Carcinogenesis">
        <title>SH3RF2 functions as an oncogene by mediating PAK4 protein stability.</title>
        <authorList>
            <person name="Kim T.W."/>
            <person name="Kang Y.K."/>
            <person name="Park Z.Y."/>
            <person name="Kim Y.H."/>
            <person name="Hong S.W."/>
            <person name="Oh S.J."/>
            <person name="Sohn H.A."/>
            <person name="Yang S.J."/>
            <person name="Jang Y.J."/>
            <person name="Lee D.C."/>
            <person name="Kim S.Y."/>
            <person name="Yoo H.S."/>
            <person name="Kim E."/>
            <person name="Yeom Y.I."/>
            <person name="Park K.C."/>
        </authorList>
    </citation>
    <scope>INTERACTION WITH TNFRSF1A</scope>
</reference>
<reference key="48">
    <citation type="journal article" date="2014" name="J. Proteomics">
        <title>An enzyme assisted RP-RPLC approach for in-depth analysis of human liver phosphoproteome.</title>
        <authorList>
            <person name="Bian Y."/>
            <person name="Song C."/>
            <person name="Cheng K."/>
            <person name="Dong M."/>
            <person name="Wang F."/>
            <person name="Huang J."/>
            <person name="Sun D."/>
            <person name="Wang L."/>
            <person name="Ye M."/>
            <person name="Zou H."/>
        </authorList>
    </citation>
    <scope>IDENTIFICATION BY MASS SPECTROMETRY [LARGE SCALE ANALYSIS]</scope>
    <source>
        <tissue>Liver</tissue>
    </source>
</reference>
<reference key="49">
    <citation type="journal article" date="2014" name="Mol. Cell">
        <title>The two faces of receptor interacting protein kinase-1.</title>
        <authorList>
            <person name="Weinlich R."/>
            <person name="Green D.R."/>
        </authorList>
    </citation>
    <scope>REVIEW</scope>
</reference>
<reference key="50">
    <citation type="journal article" date="2015" name="EMBO Rep.">
        <title>WDFY1 mediates TLR3/4 signaling by recruiting TRIF.</title>
        <authorList>
            <person name="Hu Y.H."/>
            <person name="Zhang Y."/>
            <person name="Jiang L.Q."/>
            <person name="Wang S."/>
            <person name="Lei C.Q."/>
            <person name="Sun M.S."/>
            <person name="Shu H.B."/>
            <person name="Liu Y."/>
        </authorList>
    </citation>
    <scope>INTERACTION WITH TICAM1</scope>
</reference>
<reference key="51">
    <citation type="journal article" date="2015" name="Cell Host Microbe">
        <title>Herpes simplex virus suppresses necroptosis in human cells.</title>
        <authorList>
            <person name="Guo H."/>
            <person name="Omoto S."/>
            <person name="Harris P.A."/>
            <person name="Finger J.N."/>
            <person name="Bertin J."/>
            <person name="Gough P.J."/>
            <person name="Kaiser W.J."/>
            <person name="Mocarski E.S."/>
        </authorList>
    </citation>
    <scope>INTERACTION WITH HERPES SIMPLEX VIRUS 1 AND 2 PROTEIN RIR1 (MICROBIAL INFECTION)</scope>
</reference>
<reference key="52">
    <citation type="journal article" date="2017" name="J. Virol.">
        <title>Mumps virus SH protein inhibits NF-kappaB activation by interacting with tumor necrosis factor receptor 1, interleukin-1 receptor 1, and Toll-like receptor 3 complexes.</title>
        <authorList>
            <person name="Franz S."/>
            <person name="Rennert P."/>
            <person name="Woznik M."/>
            <person name="Gruetzke J."/>
            <person name="Luedde A."/>
            <person name="Arriero Pais E.M."/>
            <person name="Finsterbusch T."/>
            <person name="Geyer H."/>
            <person name="Mankertz A."/>
            <person name="Friedrich N."/>
        </authorList>
    </citation>
    <scope>INTERACTION WITH MUMPS VIRUS PROTEIN SH (MICROBIAL INFECTION)</scope>
</reference>
<reference key="53">
    <citation type="journal article" date="2018" name="Mol. Cell">
        <title>PELI1 selectively targets kinase-active RIP3 for ubiquitylation-dependent proteasomal degradation.</title>
        <authorList>
            <person name="Choi S.W."/>
            <person name="Park H.H."/>
            <person name="Kim S."/>
            <person name="Chung J.M."/>
            <person name="Noh H.J."/>
            <person name="Kim S.K."/>
            <person name="Song H.K."/>
            <person name="Lee C.W."/>
            <person name="Morgan M.J."/>
            <person name="Kang H.C."/>
            <person name="Kim Y.S."/>
        </authorList>
    </citation>
    <scope>INTERACTION WITH PELI1 AND RIPK3</scope>
    <scope>UBIQUITINATION BY PELI1</scope>
</reference>
<reference key="54">
    <citation type="journal article" date="2018" name="Proc. Natl. Acad. Sci. U.S.A.">
        <title>Death-domain dimerization-mediated activation of RIPK1 controls necroptosis and RIPK1-dependent apoptosis.</title>
        <authorList>
            <person name="Meng H."/>
            <person name="Liu Z."/>
            <person name="Li X."/>
            <person name="Wang H."/>
            <person name="Jin T."/>
            <person name="Wu G."/>
            <person name="Shan B."/>
            <person name="Christofferson D.E."/>
            <person name="Qi C."/>
            <person name="Yu Q."/>
            <person name="Li Y."/>
            <person name="Yuan J."/>
        </authorList>
    </citation>
    <scope>FUNCTION</scope>
    <scope>SUBUNIT</scope>
    <scope>MUTAGENESIS OF LYS-599</scope>
    <scope>PHOSPHORYLATION AT SER-166</scope>
</reference>
<reference key="55">
    <citation type="journal article" date="2018" name="Science">
        <title>Biallelic RIPK1 mutations in humans cause severe immunodeficiency, arthritis, and intestinal inflammation.</title>
        <authorList>
            <person name="Cuchet-Lourenco D."/>
            <person name="Eletto D."/>
            <person name="Wu C."/>
            <person name="Plagnol V."/>
            <person name="Papapietro O."/>
            <person name="Curtis J."/>
            <person name="Ceron-Gutierrez L."/>
            <person name="Bacon C.M."/>
            <person name="Hackett S."/>
            <person name="Alsaleem B."/>
            <person name="Maes M."/>
            <person name="Gaspar M."/>
            <person name="Alisaac A."/>
            <person name="Goss E."/>
            <person name="AlIdrissi E."/>
            <person name="Siegmund D."/>
            <person name="Wajant H."/>
            <person name="Kumararatne D."/>
            <person name="AlZahrani M.S."/>
            <person name="Arkwright P.D."/>
            <person name="Abinun M."/>
            <person name="Doffinger R."/>
            <person name="Nejentsev S."/>
        </authorList>
    </citation>
    <scope>INVOLVEMENT IN IMD57</scope>
</reference>
<reference key="56">
    <citation type="journal article" date="2019" name="Front. Cell Dev. Biol.">
        <title>Ripoptocide - A Spark for Inflammation.</title>
        <authorList>
            <person name="Ang R.L."/>
            <person name="Chan M."/>
            <person name="Ting A.T."/>
        </authorList>
    </citation>
    <scope>REVIEW</scope>
</reference>
<reference key="57">
    <citation type="journal article" date="2019" name="Nat. Commun.">
        <title>Serine 25 phosphorylation inhibits RIPK1 kinase-dependent cell death in models of infection and inflammation.</title>
        <authorList>
            <person name="Dondelinger Y."/>
            <person name="Delanghe T."/>
            <person name="Priem D."/>
            <person name="Wynosky-Dolfi M.A."/>
            <person name="Sorobetea D."/>
            <person name="Rojas-Rivera D."/>
            <person name="Giansanti P."/>
            <person name="Roelandt R."/>
            <person name="Gropengiesser J."/>
            <person name="Ruckdeschel K."/>
            <person name="Savvides S.N."/>
            <person name="Heck A.J.R."/>
            <person name="Vandenabeele P."/>
            <person name="Brodsky I.E."/>
            <person name="Bertrand M.J.M."/>
        </authorList>
    </citation>
    <scope>FUNCTION</scope>
    <scope>CATALYTIC ACTIVITY</scope>
    <scope>PHOSPHORYLATION AT SER-25</scope>
    <scope>MUTAGENESIS OF SER-25 AND LYS-45</scope>
</reference>
<reference key="58">
    <citation type="journal article" date="2020" name="EMBO J.">
        <title>A unique bacterial tactic to circumvent the cell death crosstalk induced by blockade of caspase-8.</title>
        <authorList>
            <person name="Ashida H."/>
            <person name="Sasakawa C."/>
            <person name="Suzuki T."/>
        </authorList>
    </citation>
    <scope>FUNCTION</scope>
    <scope>PROTEOLYTIC CLEAVAGE (MICROBIAL INFECTION)</scope>
    <scope>MUTAGENESIS OF 539-ILE--GLY-542</scope>
</reference>
<reference key="59">
    <citation type="journal article" date="2022" name="Cell. Death. Discov.">
        <title>Grb2 interacts with necrosome components and is involved in rasfonin-induced necroptosis.</title>
        <authorList>
            <person name="Hou B."/>
            <person name="Huang H."/>
            <person name="Li Y."/>
            <person name="Liang J."/>
            <person name="Xi Z."/>
            <person name="Jiang X."/>
            <person name="Liu L."/>
            <person name="Li E."/>
        </authorList>
    </citation>
    <scope>FUNCTION</scope>
    <scope>INTERACTION WITH GRB2</scope>
</reference>
<reference key="60">
    <citation type="journal article" date="2013" name="Structure">
        <title>Structural basis of RIP1 inhibition by necrostatins.</title>
        <authorList>
            <person name="Xie T."/>
            <person name="Peng W."/>
            <person name="Liu Y."/>
            <person name="Yan C."/>
            <person name="Maki J."/>
            <person name="Degterev A."/>
            <person name="Yuan J."/>
            <person name="Shi Y."/>
        </authorList>
    </citation>
    <scope>X-RAY CRYSTALLOGRAPHY (1.8 ANGSTROMS) OF 1-294 IN COMPLEXES WITH NECROSTATIN-TYPE INHIBITORS</scope>
    <scope>CATALYTIC ACTIVITY</scope>
    <scope>ACTIVITY REGULATION</scope>
    <scope>AUTOPHOSPHORYLATION</scope>
</reference>
<reference evidence="64" key="61">
    <citation type="journal article" date="2018" name="Cell">
        <title>The structure of the necrosome RIPK1-RIPK3 core, a human hetero-amyloid signaling complex.</title>
        <authorList>
            <person name="Mompean M."/>
            <person name="Li W."/>
            <person name="Li J."/>
            <person name="Laage S."/>
            <person name="Siemer A.B."/>
            <person name="Bozkurt G."/>
            <person name="Wu H."/>
            <person name="McDermott A.E."/>
        </authorList>
    </citation>
    <scope>STRUCTURE BY NMR OF 532-549 IN COMPLEX WITH RIPK3</scope>
    <scope>SUBUNIT</scope>
    <scope>INTERACTION WITH RIPK3</scope>
    <scope>DOMAIN</scope>
    <scope>MUTAGENESIS OF SER-536</scope>
</reference>
<reference evidence="65" key="62">
    <citation type="journal article" date="2019" name="Mol. Cell">
        <title>Structural and functional insights into host death domains inactivation by the bacterial arginine GlcNAcyltransferase effector.</title>
        <authorList>
            <person name="Ding J."/>
            <person name="Pan X."/>
            <person name="Du L."/>
            <person name="Yao Q."/>
            <person name="Xue J."/>
            <person name="Yao H."/>
            <person name="Wang D.C."/>
            <person name="Li S."/>
            <person name="Shao F."/>
        </authorList>
    </citation>
    <scope>X-RAY CRYSTALLOGRAPHY (1.45 ANGSTROMS) OF 561-671</scope>
    <scope>GLYCOSYLATION AT ARG-603 (MICROBIAL INFECTION)</scope>
    <scope>MUTAGENESIS OF ARG-603</scope>
</reference>
<reference key="63">
    <citation type="journal article" date="2007" name="Nature">
        <title>Patterns of somatic mutation in human cancer genomes.</title>
        <authorList>
            <person name="Greenman C."/>
            <person name="Stephens P."/>
            <person name="Smith R."/>
            <person name="Dalgliesh G.L."/>
            <person name="Hunter C."/>
            <person name="Bignell G."/>
            <person name="Davies H."/>
            <person name="Teague J."/>
            <person name="Butler A."/>
            <person name="Stevens C."/>
            <person name="Edkins S."/>
            <person name="O'Meara S."/>
            <person name="Vastrik I."/>
            <person name="Schmidt E.E."/>
            <person name="Avis T."/>
            <person name="Barthorpe S."/>
            <person name="Bhamra G."/>
            <person name="Buck G."/>
            <person name="Choudhury B."/>
            <person name="Clements J."/>
            <person name="Cole J."/>
            <person name="Dicks E."/>
            <person name="Forbes S."/>
            <person name="Gray K."/>
            <person name="Halliday K."/>
            <person name="Harrison R."/>
            <person name="Hills K."/>
            <person name="Hinton J."/>
            <person name="Jenkinson A."/>
            <person name="Jones D."/>
            <person name="Menzies A."/>
            <person name="Mironenko T."/>
            <person name="Perry J."/>
            <person name="Raine K."/>
            <person name="Richardson D."/>
            <person name="Shepherd R."/>
            <person name="Small A."/>
            <person name="Tofts C."/>
            <person name="Varian J."/>
            <person name="Webb T."/>
            <person name="West S."/>
            <person name="Widaa S."/>
            <person name="Yates A."/>
            <person name="Cahill D.P."/>
            <person name="Louis D.N."/>
            <person name="Goldstraw P."/>
            <person name="Nicholson A.G."/>
            <person name="Brasseur F."/>
            <person name="Looijenga L."/>
            <person name="Weber B.L."/>
            <person name="Chiew Y.-E."/>
            <person name="DeFazio A."/>
            <person name="Greaves M.F."/>
            <person name="Green A.R."/>
            <person name="Campbell P."/>
            <person name="Birney E."/>
            <person name="Easton D.F."/>
            <person name="Chenevix-Trench G."/>
            <person name="Tan M.-H."/>
            <person name="Khoo S.K."/>
            <person name="Teh B.T."/>
            <person name="Yuen S.T."/>
            <person name="Leung S.Y."/>
            <person name="Wooster R."/>
            <person name="Futreal P.A."/>
            <person name="Stratton M.R."/>
        </authorList>
    </citation>
    <scope>VARIANTS [LARGE SCALE ANALYSIS] VAL-64; ILE-81; VAL-220; SER-404; VAL-443 AND VAL-569</scope>
</reference>
<reference key="64">
    <citation type="journal article" date="2020" name="Nature">
        <title>Mutations that prevent caspase cleavage of RIPK1 cause autoinflammatory disease.</title>
        <authorList>
            <person name="Lalaoui N."/>
            <person name="Boyden S.E."/>
            <person name="Oda H."/>
            <person name="Wood G.M."/>
            <person name="Stone D.L."/>
            <person name="Chau D."/>
            <person name="Liu L."/>
            <person name="Stoffels M."/>
            <person name="Kratina T."/>
            <person name="Lawlor K.E."/>
            <person name="Zaal K.J.M."/>
            <person name="Hoffmann P.M."/>
            <person name="Etemadi N."/>
            <person name="Shield-Artin K."/>
            <person name="Biben C."/>
            <person name="Tsai W.L."/>
            <person name="Blake M.D."/>
            <person name="Kuehn H.S."/>
            <person name="Yang D."/>
            <person name="Anderton H."/>
            <person name="Silke N."/>
            <person name="Wachsmuth L."/>
            <person name="Zheng L."/>
            <person name="Moura N.S."/>
            <person name="Beck D.B."/>
            <person name="Gutierrez-Cruz G."/>
            <person name="Ombrello A.K."/>
            <person name="Pinto-Patarroyo G.P."/>
            <person name="Kueh A.J."/>
            <person name="Herold M.J."/>
            <person name="Hall C."/>
            <person name="Wang H."/>
            <person name="Chae J.J."/>
            <person name="Dmitrieva N.I."/>
            <person name="McKenzie M."/>
            <person name="Light A."/>
            <person name="Barham B.K."/>
            <person name="Jones A."/>
            <person name="Romeo T.M."/>
            <person name="Zhou Q."/>
            <person name="Aksentijevich I."/>
            <person name="Mullikin J.C."/>
            <person name="Gross A.J."/>
            <person name="Shum A.K."/>
            <person name="Hawkins E.D."/>
            <person name="Masters S.L."/>
            <person name="Lenardo M.J."/>
            <person name="Boehm M."/>
            <person name="Rosenzweig S.D."/>
            <person name="Pasparakis M."/>
            <person name="Voss A.K."/>
            <person name="Gadina M."/>
            <person name="Kastner D.L."/>
            <person name="Silke J."/>
        </authorList>
    </citation>
    <scope>INVOLVEMENT IN AIEFL</scope>
    <scope>VARIANTS AIEFL ASN-324; HIS-324 AND TYR-324</scope>
    <scope>CHARACTERIZATION OF VARIANTS AIEFL ASN-324; HIS-324 AND TYR-324</scope>
    <scope>CLEAVAGE BY CASP8</scope>
    <scope>FUNCTION</scope>
</reference>
<reference key="65">
    <citation type="journal article" date="2020" name="Nature">
        <title>A dominant autoinflammatory disease caused by non-cleavable variants of RIPK1.</title>
        <authorList>
            <person name="Tao P."/>
            <person name="Sun J."/>
            <person name="Wu Z."/>
            <person name="Wang S."/>
            <person name="Wang J."/>
            <person name="Li W."/>
            <person name="Pan H."/>
            <person name="Bai R."/>
            <person name="Zhang J."/>
            <person name="Wang Y."/>
            <person name="Lee P.Y."/>
            <person name="Ying W."/>
            <person name="Zhou Q."/>
            <person name="Hou J."/>
            <person name="Wang W."/>
            <person name="Sun B."/>
            <person name="Yang M."/>
            <person name="Liu D."/>
            <person name="Fang R."/>
            <person name="Han H."/>
            <person name="Yang Z."/>
            <person name="Huang X."/>
            <person name="Li H."/>
            <person name="Deuitch N."/>
            <person name="Zhang Y."/>
            <person name="Dissanayake D."/>
            <person name="Haude K."/>
            <person name="McWalter K."/>
            <person name="Roadhouse C."/>
            <person name="MacKenzie J.J."/>
            <person name="Laxer R.M."/>
            <person name="Aksentijevich I."/>
            <person name="Yu X."/>
            <person name="Wang X."/>
            <person name="Yuan J."/>
            <person name="Zhou Q."/>
        </authorList>
    </citation>
    <scope>INVOLVEMENT IN AIEFL</scope>
    <scope>VARIANTS AIEFL HIS-324 AND VAL-324</scope>
    <scope>CHARACTERIZATION OF VARIANTS AIEFL HIS-324 AND VAL-324</scope>
    <scope>FUNCTION</scope>
    <scope>CATALYTIC ACTIVITY</scope>
    <scope>AUTOPHOSPHORYLATION</scope>
    <scope>PHOSPHORYLATION AT SER-166</scope>
    <scope>CLEAVAGE BY CASP8</scope>
</reference>
<feature type="chain" id="PRO_0000086606" description="Receptor-interacting serine/threonine-protein kinase 1">
    <location>
        <begin position="1"/>
        <end position="671"/>
    </location>
</feature>
<feature type="domain" description="Protein kinase" evidence="5">
    <location>
        <begin position="17"/>
        <end position="289"/>
    </location>
</feature>
<feature type="domain" description="Death" evidence="4">
    <location>
        <begin position="583"/>
        <end position="669"/>
    </location>
</feature>
<feature type="region of interest" description="Interaction with SQSTM1" evidence="8">
    <location>
        <begin position="290"/>
        <end position="582"/>
    </location>
</feature>
<feature type="region of interest" description="Disordered" evidence="7">
    <location>
        <begin position="331"/>
        <end position="354"/>
    </location>
</feature>
<feature type="region of interest" description="Disordered" evidence="7">
    <location>
        <begin position="389"/>
        <end position="455"/>
    </location>
</feature>
<feature type="short sequence motif" description="RIP homotypic interaction motif (RHIM)" evidence="14 43">
    <location>
        <begin position="531"/>
        <end position="547"/>
    </location>
</feature>
<feature type="compositionally biased region" description="Polar residues" evidence="7">
    <location>
        <begin position="331"/>
        <end position="348"/>
    </location>
</feature>
<feature type="compositionally biased region" description="Polar residues" evidence="7">
    <location>
        <begin position="428"/>
        <end position="444"/>
    </location>
</feature>
<feature type="active site" description="Proton acceptor" evidence="5 6">
    <location>
        <position position="138"/>
    </location>
</feature>
<feature type="binding site" evidence="5">
    <location>
        <begin position="23"/>
        <end position="31"/>
    </location>
    <ligand>
        <name>ATP</name>
        <dbReference type="ChEBI" id="CHEBI:30616"/>
    </ligand>
</feature>
<feature type="binding site" evidence="5">
    <location>
        <position position="45"/>
    </location>
    <ligand>
        <name>ATP</name>
        <dbReference type="ChEBI" id="CHEBI:30616"/>
    </ligand>
</feature>
<feature type="site" description="Cleavage; by CASP8" evidence="11 48 49">
    <location>
        <begin position="324"/>
        <end position="325"/>
    </location>
</feature>
<feature type="modified residue" description="Phosphoserine; by IKKA and IKKB" evidence="26">
    <location>
        <position position="6"/>
    </location>
</feature>
<feature type="modified residue" description="Phosphoserine; by autocatalysis" evidence="3">
    <location>
        <position position="20"/>
    </location>
</feature>
<feature type="modified residue" description="Phosphoserine; by IKKA and IKKB" evidence="26 47">
    <location>
        <position position="25"/>
    </location>
</feature>
<feature type="modified residue" description="Phosphoserine; by RIPK3 and autocatalysis" evidence="3">
    <location>
        <position position="161"/>
    </location>
</feature>
<feature type="modified residue" description="Phosphoserine; by autocatalysis" evidence="3 42 48">
    <location>
        <position position="166"/>
    </location>
</feature>
<feature type="modified residue" description="Phosphoserine" evidence="26">
    <location>
        <position position="303"/>
    </location>
</feature>
<feature type="modified residue" description="Phosphoserine; by MAP3K7" evidence="26 67 68">
    <location>
        <position position="320"/>
    </location>
</feature>
<feature type="modified residue" description="Phosphoserine; by MAP3K7" evidence="1">
    <location>
        <position position="331"/>
    </location>
</feature>
<feature type="modified residue" description="Phosphoserine; by MAP3K7" evidence="26">
    <location>
        <position position="333"/>
    </location>
</feature>
<feature type="modified residue" description="Phosphotyrosine" evidence="66">
    <location>
        <position position="384"/>
    </location>
</feature>
<feature type="glycosylation site" description="(Microbial infection) N-beta-linked (GlcNAc) arginine" evidence="46 62 65">
    <location>
        <position position="603"/>
    </location>
</feature>
<feature type="cross-link" description="Glycyl lysine isopeptide (Lys-Gly) (interchain with G-Cter in ubiquitin)" evidence="21">
    <location>
        <position position="377"/>
    </location>
</feature>
<feature type="splice variant" id="VSP_037690" description="In isoform 2." evidence="58">
    <location>
        <begin position="108"/>
        <end position="153"/>
    </location>
</feature>
<feature type="sequence variant" id="VAR_041039" description="In a colorectal adenocarcinoma sample; somatic mutation; dbSNP:rs774996232." evidence="22">
    <original>A</original>
    <variation>V</variation>
    <location>
        <position position="64"/>
    </location>
</feature>
<feature type="sequence variant" id="VAR_041040" description="In a colorectal adenocarcinoma sample; somatic mutation; dbSNP:rs758268804." evidence="22">
    <original>V</original>
    <variation>I</variation>
    <location>
        <position position="81"/>
    </location>
</feature>
<feature type="sequence variant" id="VAR_041041" description="In a colorectal adenocarcinoma sample; somatic mutation; dbSNP:rs759012409." evidence="22">
    <original>A</original>
    <variation>V</variation>
    <location>
        <position position="220"/>
    </location>
</feature>
<feature type="sequence variant" id="VAR_021109" description="In dbSNP:rs17548383." evidence="57">
    <original>E</original>
    <variation>K</variation>
    <location>
        <position position="234"/>
    </location>
</feature>
<feature type="sequence variant" id="VAR_083518" description="In AIEFL; prevents cleavage by CASP8; increased kinase activity; increased inflammatory response; dbSNP:rs1760720617." evidence="48 49">
    <original>D</original>
    <variation>H</variation>
    <location>
        <position position="324"/>
    </location>
</feature>
<feature type="sequence variant" id="VAR_083519" description="In AIEFL; prevents cleavage by CASP8; changed inflammatory response; dbSNP:rs1760720617." evidence="49">
    <original>D</original>
    <variation>N</variation>
    <location>
        <position position="324"/>
    </location>
</feature>
<feature type="sequence variant" id="VAR_084135" description="In AIEFL; prevents cleavage by CASP8; increased kinase activity; increased inflammatory response; dbSNP:rs1760720924." evidence="48">
    <original>D</original>
    <variation>V</variation>
    <location>
        <position position="324"/>
    </location>
</feature>
<feature type="sequence variant" id="VAR_083520" description="In AIEFL; prevents cleavage by CASP8; changed inflammatory response; dbSNP:rs1760720617." evidence="49">
    <original>D</original>
    <variation>Y</variation>
    <location>
        <position position="324"/>
    </location>
</feature>
<feature type="sequence variant" id="VAR_041042" description="In dbSNP:rs34872409." evidence="22">
    <original>A</original>
    <variation>S</variation>
    <location>
        <position position="404"/>
    </location>
</feature>
<feature type="sequence variant" id="VAR_058285" description="In dbSNP:rs3173519." evidence="19 52 53">
    <original>A</original>
    <variation>V</variation>
    <location>
        <position position="438"/>
    </location>
</feature>
<feature type="sequence variant" id="VAR_041043" description="In dbSNP:rs35722193." evidence="22">
    <original>A</original>
    <variation>V</variation>
    <location>
        <position position="443"/>
    </location>
</feature>
<feature type="sequence variant" id="VAR_041044" description="In dbSNP:rs55861377." evidence="22">
    <original>A</original>
    <variation>V</variation>
    <location>
        <position position="569"/>
    </location>
</feature>
<feature type="mutagenesis site" description="Phophomimetic mutant. Significant loss of kinase activity." evidence="47">
    <original>S</original>
    <variation>D</variation>
    <location>
        <position position="25"/>
    </location>
</feature>
<feature type="mutagenesis site" description="Abolishes kinase activity." evidence="47 53">
    <original>K</original>
    <variation>A</variation>
    <location>
        <position position="45"/>
    </location>
</feature>
<feature type="mutagenesis site" description="Decreases RIPK1 kinase activity." evidence="26">
    <original>S</original>
    <variation>A</variation>
    <location>
        <position position="161"/>
    </location>
</feature>
<feature type="mutagenesis site" description="No effect on RIPK1 autophosphorylation." evidence="26">
    <original>S</original>
    <variation>E</variation>
    <location>
        <position position="161"/>
    </location>
</feature>
<feature type="mutagenesis site" description="Abolishes cleavage by caspase-8." evidence="11">
    <original>D</original>
    <variation>K</variation>
    <location>
        <position position="324"/>
    </location>
</feature>
<feature type="mutagenesis site" description="Abolishes RIP-mediated NF-Kappa-B activation." evidence="21">
    <original>K</original>
    <variation>R</variation>
    <location>
        <position position="377"/>
    </location>
</feature>
<feature type="mutagenesis site" description="Strongly reduced homodimerization and interaction with RIPK3." evidence="43">
    <original>S</original>
    <variation>C</variation>
    <location>
        <position position="536"/>
    </location>
</feature>
<feature type="mutagenesis site" description="Abolished cleavage by S.flexneri OspD3." evidence="50">
    <original>IQIG</original>
    <variation>AAAA</variation>
    <location>
        <begin position="539"/>
        <end position="542"/>
    </location>
</feature>
<feature type="mutagenesis site" description="Blocks homodimerization, necroptosis and apoptosis." evidence="42">
    <original>K</original>
    <variation>R</variation>
    <location>
        <position position="599"/>
    </location>
</feature>
<feature type="mutagenesis site" description="Abolished GlcNAcylation by E.coli NleB1." evidence="46">
    <original>R</original>
    <variation>A</variation>
    <location>
        <position position="603"/>
    </location>
</feature>
<feature type="sequence conflict" description="In Ref. 3; BAG36858." evidence="61" ref="3">
    <original>R</original>
    <variation>I</variation>
    <location>
        <position position="258"/>
    </location>
</feature>
<feature type="sequence conflict" description="In Ref. 3; BAG36858." evidence="61" ref="3">
    <original>R</original>
    <variation>S</variation>
    <location>
        <position position="286"/>
    </location>
</feature>
<feature type="sequence conflict" description="In Ref. 8; AAC50137." evidence="61" ref="8">
    <original>T</original>
    <variation>S</variation>
    <location>
        <position position="514"/>
    </location>
</feature>
<feature type="strand" evidence="78">
    <location>
        <begin position="10"/>
        <end position="12"/>
    </location>
</feature>
<feature type="helix" evidence="70">
    <location>
        <begin position="14"/>
        <end position="16"/>
    </location>
</feature>
<feature type="strand" evidence="72">
    <location>
        <begin position="17"/>
        <end position="19"/>
    </location>
</feature>
<feature type="strand" evidence="70">
    <location>
        <begin position="20"/>
        <end position="22"/>
    </location>
</feature>
<feature type="strand" evidence="78">
    <location>
        <begin position="26"/>
        <end position="28"/>
    </location>
</feature>
<feature type="strand" evidence="70">
    <location>
        <begin position="30"/>
        <end position="36"/>
    </location>
</feature>
<feature type="turn" evidence="70">
    <location>
        <begin position="37"/>
        <end position="39"/>
    </location>
</feature>
<feature type="strand" evidence="70">
    <location>
        <begin position="40"/>
        <end position="51"/>
    </location>
</feature>
<feature type="helix" evidence="70">
    <location>
        <begin position="54"/>
        <end position="56"/>
    </location>
</feature>
<feature type="helix" evidence="70">
    <location>
        <begin position="57"/>
        <end position="68"/>
    </location>
</feature>
<feature type="strand" evidence="70">
    <location>
        <begin position="78"/>
        <end position="84"/>
    </location>
</feature>
<feature type="strand" evidence="70">
    <location>
        <begin position="87"/>
        <end position="93"/>
    </location>
</feature>
<feature type="helix" evidence="70">
    <location>
        <begin position="100"/>
        <end position="104"/>
    </location>
</feature>
<feature type="strand" evidence="70">
    <location>
        <begin position="106"/>
        <end position="108"/>
    </location>
</feature>
<feature type="helix" evidence="70">
    <location>
        <begin position="112"/>
        <end position="131"/>
    </location>
</feature>
<feature type="helix" evidence="70">
    <location>
        <begin position="141"/>
        <end position="143"/>
    </location>
</feature>
<feature type="strand" evidence="70">
    <location>
        <begin position="144"/>
        <end position="146"/>
    </location>
</feature>
<feature type="strand" evidence="70">
    <location>
        <begin position="152"/>
        <end position="154"/>
    </location>
</feature>
<feature type="helix" evidence="70">
    <location>
        <begin position="163"/>
        <end position="168"/>
    </location>
</feature>
<feature type="strand" evidence="69">
    <location>
        <begin position="171"/>
        <end position="173"/>
    </location>
</feature>
<feature type="helix" evidence="77">
    <location>
        <begin position="190"/>
        <end position="192"/>
    </location>
</feature>
<feature type="helix" evidence="70">
    <location>
        <begin position="195"/>
        <end position="197"/>
    </location>
</feature>
<feature type="strand" evidence="70">
    <location>
        <begin position="201"/>
        <end position="203"/>
    </location>
</feature>
<feature type="helix" evidence="70">
    <location>
        <begin position="207"/>
        <end position="223"/>
    </location>
</feature>
<feature type="helix" evidence="76">
    <location>
        <begin position="228"/>
        <end position="230"/>
    </location>
</feature>
<feature type="helix" evidence="70">
    <location>
        <begin position="234"/>
        <end position="242"/>
    </location>
</feature>
<feature type="helix" evidence="70">
    <location>
        <begin position="249"/>
        <end position="251"/>
    </location>
</feature>
<feature type="turn" evidence="75">
    <location>
        <begin position="252"/>
        <end position="255"/>
    </location>
</feature>
<feature type="helix" evidence="70">
    <location>
        <begin position="258"/>
        <end position="267"/>
    </location>
</feature>
<feature type="helix" evidence="70">
    <location>
        <begin position="272"/>
        <end position="274"/>
    </location>
</feature>
<feature type="helix" evidence="70">
    <location>
        <begin position="278"/>
        <end position="292"/>
    </location>
</feature>
<feature type="helix" evidence="71">
    <location>
        <begin position="294"/>
        <end position="296"/>
    </location>
</feature>
<feature type="helix" evidence="71">
    <location>
        <begin position="297"/>
        <end position="309"/>
    </location>
</feature>
<feature type="turn" evidence="71">
    <location>
        <begin position="310"/>
        <end position="312"/>
    </location>
</feature>
<feature type="strand" evidence="73">
    <location>
        <begin position="533"/>
        <end position="542"/>
    </location>
</feature>
<feature type="helix" evidence="74">
    <location>
        <begin position="575"/>
        <end position="577"/>
    </location>
</feature>
<feature type="helix" evidence="74">
    <location>
        <begin position="584"/>
        <end position="593"/>
    </location>
</feature>
<feature type="helix" evidence="74">
    <location>
        <begin position="599"/>
        <end position="604"/>
    </location>
</feature>
<feature type="helix" evidence="74">
    <location>
        <begin position="609"/>
        <end position="618"/>
    </location>
</feature>
<feature type="turn" evidence="74">
    <location>
        <begin position="619"/>
        <end position="622"/>
    </location>
</feature>
<feature type="helix" evidence="74">
    <location>
        <begin position="624"/>
        <end position="643"/>
    </location>
</feature>
<feature type="helix" evidence="74">
    <location>
        <begin position="646"/>
        <end position="655"/>
    </location>
</feature>
<feature type="helix" evidence="74">
    <location>
        <begin position="659"/>
        <end position="668"/>
    </location>
</feature>
<evidence type="ECO:0000250" key="1">
    <source>
        <dbReference type="UniProtKB" id="Q60855"/>
    </source>
</evidence>
<evidence type="ECO:0000250" key="2">
    <source>
        <dbReference type="UniProtKB" id="Q9ZUF4"/>
    </source>
</evidence>
<evidence type="ECO:0000255" key="3"/>
<evidence type="ECO:0000255" key="4">
    <source>
        <dbReference type="PROSITE-ProRule" id="PRU00064"/>
    </source>
</evidence>
<evidence type="ECO:0000255" key="5">
    <source>
        <dbReference type="PROSITE-ProRule" id="PRU00159"/>
    </source>
</evidence>
<evidence type="ECO:0000255" key="6">
    <source>
        <dbReference type="PROSITE-ProRule" id="PRU10027"/>
    </source>
</evidence>
<evidence type="ECO:0000256" key="7">
    <source>
        <dbReference type="SAM" id="MobiDB-lite"/>
    </source>
</evidence>
<evidence type="ECO:0000269" key="8">
    <source>
    </source>
</evidence>
<evidence type="ECO:0000269" key="9">
    <source>
    </source>
</evidence>
<evidence type="ECO:0000269" key="10">
    <source>
    </source>
</evidence>
<evidence type="ECO:0000269" key="11">
    <source>
    </source>
</evidence>
<evidence type="ECO:0000269" key="12">
    <source>
    </source>
</evidence>
<evidence type="ECO:0000269" key="13">
    <source>
    </source>
</evidence>
<evidence type="ECO:0000269" key="14">
    <source>
    </source>
</evidence>
<evidence type="ECO:0000269" key="15">
    <source>
    </source>
</evidence>
<evidence type="ECO:0000269" key="16">
    <source>
    </source>
</evidence>
<evidence type="ECO:0000269" key="17">
    <source>
    </source>
</evidence>
<evidence type="ECO:0000269" key="18">
    <source>
    </source>
</evidence>
<evidence type="ECO:0000269" key="19">
    <source>
    </source>
</evidence>
<evidence type="ECO:0000269" key="20">
    <source>
    </source>
</evidence>
<evidence type="ECO:0000269" key="21">
    <source>
    </source>
</evidence>
<evidence type="ECO:0000269" key="22">
    <source>
    </source>
</evidence>
<evidence type="ECO:0000269" key="23">
    <source>
    </source>
</evidence>
<evidence type="ECO:0000269" key="24">
    <source>
    </source>
</evidence>
<evidence type="ECO:0000269" key="25">
    <source>
    </source>
</evidence>
<evidence type="ECO:0000269" key="26">
    <source>
    </source>
</evidence>
<evidence type="ECO:0000269" key="27">
    <source>
    </source>
</evidence>
<evidence type="ECO:0000269" key="28">
    <source>
    </source>
</evidence>
<evidence type="ECO:0000269" key="29">
    <source>
    </source>
</evidence>
<evidence type="ECO:0000269" key="30">
    <source>
    </source>
</evidence>
<evidence type="ECO:0000269" key="31">
    <source>
    </source>
</evidence>
<evidence type="ECO:0000269" key="32">
    <source>
    </source>
</evidence>
<evidence type="ECO:0000269" key="33">
    <source>
    </source>
</evidence>
<evidence type="ECO:0000269" key="34">
    <source>
    </source>
</evidence>
<evidence type="ECO:0000269" key="35">
    <source>
    </source>
</evidence>
<evidence type="ECO:0000269" key="36">
    <source>
    </source>
</evidence>
<evidence type="ECO:0000269" key="37">
    <source>
    </source>
</evidence>
<evidence type="ECO:0000269" key="38">
    <source>
    </source>
</evidence>
<evidence type="ECO:0000269" key="39">
    <source>
    </source>
</evidence>
<evidence type="ECO:0000269" key="40">
    <source>
    </source>
</evidence>
<evidence type="ECO:0000269" key="41">
    <source>
    </source>
</evidence>
<evidence type="ECO:0000269" key="42">
    <source>
    </source>
</evidence>
<evidence type="ECO:0000269" key="43">
    <source>
    </source>
</evidence>
<evidence type="ECO:0000269" key="44">
    <source>
    </source>
</evidence>
<evidence type="ECO:0000269" key="45">
    <source>
    </source>
</evidence>
<evidence type="ECO:0000269" key="46">
    <source>
    </source>
</evidence>
<evidence type="ECO:0000269" key="47">
    <source>
    </source>
</evidence>
<evidence type="ECO:0000269" key="48">
    <source>
    </source>
</evidence>
<evidence type="ECO:0000269" key="49">
    <source>
    </source>
</evidence>
<evidence type="ECO:0000269" key="50">
    <source>
    </source>
</evidence>
<evidence type="ECO:0000269" key="51">
    <source>
    </source>
</evidence>
<evidence type="ECO:0000269" key="52">
    <source>
    </source>
</evidence>
<evidence type="ECO:0000269" key="53">
    <source>
    </source>
</evidence>
<evidence type="ECO:0000269" key="54">
    <source>
    </source>
</evidence>
<evidence type="ECO:0000269" key="55">
    <source>
    </source>
</evidence>
<evidence type="ECO:0000269" key="56">
    <source ref="35"/>
</evidence>
<evidence type="ECO:0000269" key="57">
    <source ref="4"/>
</evidence>
<evidence type="ECO:0000303" key="58">
    <source>
    </source>
</evidence>
<evidence type="ECO:0000303" key="59">
    <source>
    </source>
</evidence>
<evidence type="ECO:0000303" key="60">
    <source>
    </source>
</evidence>
<evidence type="ECO:0000305" key="61"/>
<evidence type="ECO:0000305" key="62">
    <source>
    </source>
</evidence>
<evidence type="ECO:0000312" key="63">
    <source>
        <dbReference type="HGNC" id="HGNC:10019"/>
    </source>
</evidence>
<evidence type="ECO:0007744" key="64">
    <source>
        <dbReference type="PDB" id="5V7Z"/>
    </source>
</evidence>
<evidence type="ECO:0007744" key="65">
    <source>
        <dbReference type="PDB" id="6AC5"/>
    </source>
</evidence>
<evidence type="ECO:0007744" key="66">
    <source>
    </source>
</evidence>
<evidence type="ECO:0007744" key="67">
    <source>
    </source>
</evidence>
<evidence type="ECO:0007744" key="68">
    <source>
    </source>
</evidence>
<evidence type="ECO:0007829" key="69">
    <source>
        <dbReference type="PDB" id="4ITH"/>
    </source>
</evidence>
<evidence type="ECO:0007829" key="70">
    <source>
        <dbReference type="PDB" id="4ITJ"/>
    </source>
</evidence>
<evidence type="ECO:0007829" key="71">
    <source>
        <dbReference type="PDB" id="4NEU"/>
    </source>
</evidence>
<evidence type="ECO:0007829" key="72">
    <source>
        <dbReference type="PDB" id="5HX6"/>
    </source>
</evidence>
<evidence type="ECO:0007829" key="73">
    <source>
        <dbReference type="PDB" id="5V7Z"/>
    </source>
</evidence>
<evidence type="ECO:0007829" key="74">
    <source>
        <dbReference type="PDB" id="6AC5"/>
    </source>
</evidence>
<evidence type="ECO:0007829" key="75">
    <source>
        <dbReference type="PDB" id="6C3E"/>
    </source>
</evidence>
<evidence type="ECO:0007829" key="76">
    <source>
        <dbReference type="PDB" id="6C4D"/>
    </source>
</evidence>
<evidence type="ECO:0007829" key="77">
    <source>
        <dbReference type="PDB" id="6NW2"/>
    </source>
</evidence>
<evidence type="ECO:0007829" key="78">
    <source>
        <dbReference type="PDB" id="7FD0"/>
    </source>
</evidence>
<protein>
    <recommendedName>
        <fullName>Receptor-interacting serine/threonine-protein kinase 1</fullName>
        <ecNumber evidence="35 47 48 53">2.7.11.1</ecNumber>
    </recommendedName>
    <alternativeName>
        <fullName evidence="60">Cell death protein RIP</fullName>
    </alternativeName>
    <alternativeName>
        <fullName evidence="59">Receptor-interacting protein 1</fullName>
        <shortName evidence="59">RIP-1</shortName>
    </alternativeName>
</protein>
<sequence length="671" mass="75931">MQPDMSLNVIKMKSSDFLESAELDSGGFGKVSLCFHRTQGLMIMKTVYKGPNCIEHNEALLEEAKMMNRLRHSRVVKLLGVIIEEGKYSLVMEYMEKGNLMHVLKAEMSTPLSVKGRIILEIIEGMCYLHGKGVIHKDLKPENILVDNDFHIKIADLGLASFKMWSKLNNEEHNELREVDGTAKKNGGTLYYMAPEHLNDVNAKPTEKSDVYSFAVVLWAIFANKEPYENAICEQQLIMCIKSGNRPDVDDITEYCPREIISLMKLCWEANPEARPTFPGIEEKFRPFYLSQLEESVEEDVKSLKKEYSNENAVVKRMQSLQLDCVAVPSSRSNSATEQPGSLHSSQGLGMGPVEESWFAPSLEHPQEENEPSLQSKLQDEANYHLYGSRMDRQTKQQPRQNVAYNREEERRRRVSHDPFAQQRPYENFQNTEGKGTAYSSAASHGNAVHQPSGLTSQPQVLYQNNGLYSSHGFGTRPLDPGTAGPRVWYRPIPSHMPSLHNIPVPETNYLGNTPTMPFSSLPPTDESIKYTIYNSTGIQIGAYNYMEIGGTSSSLLDSTNTNFKEEPAAKYQAIFDNTTSLTDKHLDPIRENLGKHWKNCARKLGFTQSQIDEIDHDYERDGLKEKVYQMLQKWVMREGIKGATVGKLAQALHQCSRIDLLSSLIYVSQN</sequence>